<gene>
    <name evidence="37" type="primary">PRKCD</name>
    <name evidence="30" type="synonym">PKCD</name>
</gene>
<feature type="chain" id="PRO_0000055694" description="Protein kinase C delta type">
    <location>
        <begin position="1"/>
        <end position="676"/>
    </location>
</feature>
<feature type="chain" id="PRO_0000421667" description="Protein kinase C delta type regulatory subunit" evidence="1">
    <location>
        <begin position="1"/>
        <end position="329"/>
    </location>
</feature>
<feature type="chain" id="PRO_0000421668" description="Protein kinase C delta type catalytic subunit" evidence="1">
    <location>
        <begin position="330"/>
        <end position="676"/>
    </location>
</feature>
<feature type="domain" description="C2" evidence="4">
    <location>
        <begin position="1"/>
        <end position="106"/>
    </location>
</feature>
<feature type="domain" description="Protein kinase" evidence="5">
    <location>
        <begin position="349"/>
        <end position="603"/>
    </location>
</feature>
<feature type="domain" description="AGC-kinase C-terminal" evidence="7">
    <location>
        <begin position="604"/>
        <end position="675"/>
    </location>
</feature>
<feature type="zinc finger region" description="Phorbol-ester/DAG-type 1" evidence="6">
    <location>
        <begin position="158"/>
        <end position="208"/>
    </location>
</feature>
<feature type="zinc finger region" description="Phorbol-ester/DAG-type 2" evidence="6">
    <location>
        <begin position="230"/>
        <end position="280"/>
    </location>
</feature>
<feature type="active site" description="Proton acceptor" evidence="5 8">
    <location>
        <position position="473"/>
    </location>
</feature>
<feature type="binding site" evidence="5">
    <location>
        <begin position="355"/>
        <end position="363"/>
    </location>
    <ligand>
        <name>ATP</name>
        <dbReference type="ChEBI" id="CHEBI:30616"/>
    </ligand>
</feature>
<feature type="binding site" evidence="5">
    <location>
        <position position="378"/>
    </location>
    <ligand>
        <name>ATP</name>
        <dbReference type="ChEBI" id="CHEBI:30616"/>
    </ligand>
</feature>
<feature type="site" description="Interaction with phosphotyrosine-containing peptide">
    <location>
        <position position="48"/>
    </location>
</feature>
<feature type="site" description="Interaction with phosphotyrosine-containing peptide">
    <location>
        <position position="62"/>
    </location>
</feature>
<feature type="site" description="Interaction with phosphotyrosine-containing peptide">
    <location>
        <position position="67"/>
    </location>
</feature>
<feature type="site" description="Interaction with phosphotyrosine-containing peptide">
    <location>
        <position position="123"/>
    </location>
</feature>
<feature type="site" description="Cleavage; by caspase-3" evidence="1">
    <location>
        <begin position="329"/>
        <end position="330"/>
    </location>
</feature>
<feature type="modified residue" description="Phosphothreonine" evidence="3">
    <location>
        <position position="43"/>
    </location>
</feature>
<feature type="modified residue" description="Phosphothreonine" evidence="21">
    <location>
        <position position="50"/>
    </location>
</feature>
<feature type="modified residue" description="Phosphotyrosine" evidence="2">
    <location>
        <position position="64"/>
    </location>
</feature>
<feature type="modified residue" description="Phosphoserine" evidence="38">
    <location>
        <position position="130"/>
    </location>
</feature>
<feature type="modified residue" description="Phosphothreonine" evidence="21 44">
    <location>
        <position position="141"/>
    </location>
</feature>
<feature type="modified residue" description="Phosphotyrosine" evidence="15">
    <location>
        <position position="155"/>
    </location>
</feature>
<feature type="modified residue" description="Phosphothreonine" evidence="40">
    <location>
        <position position="218"/>
    </location>
</feature>
<feature type="modified residue" description="Phosphoserine; by autocatalysis" evidence="20 39 44">
    <location>
        <position position="299"/>
    </location>
</feature>
<feature type="modified residue" description="Phosphoserine; by autocatalysis" evidence="20 38 44">
    <location>
        <position position="302"/>
    </location>
</feature>
<feature type="modified residue" description="Phosphoserine; by autocatalysis" evidence="20 21 38 42 43 44">
    <location>
        <position position="304"/>
    </location>
</feature>
<feature type="modified residue" description="Phosphoserine" evidence="38 44">
    <location>
        <position position="307"/>
    </location>
</feature>
<feature type="modified residue" description="Phosphotyrosine" evidence="19 39 40 41">
    <location>
        <position position="313"/>
    </location>
</feature>
<feature type="modified residue" description="Phosphotyrosine; by SRC" evidence="2">
    <location>
        <position position="334"/>
    </location>
</feature>
<feature type="modified residue" description="Phosphotyrosine" evidence="42">
    <location>
        <position position="374"/>
    </location>
</feature>
<feature type="modified residue" description="Phosphothreonine" evidence="21">
    <location>
        <position position="451"/>
    </location>
</feature>
<feature type="modified residue" description="Phosphoserine" evidence="39 44">
    <location>
        <position position="503"/>
    </location>
</feature>
<feature type="modified residue" description="Phosphoserine" evidence="21">
    <location>
        <position position="506"/>
    </location>
</feature>
<feature type="modified residue" description="Phosphothreonine; by autocatalysis" evidence="21 36">
    <location>
        <position position="507"/>
    </location>
</feature>
<feature type="modified residue" description="Phosphotyrosine" evidence="19">
    <location>
        <position position="567"/>
    </location>
</feature>
<feature type="modified residue" description="Phosphoserine" evidence="24 42 43">
    <location>
        <position position="645"/>
    </location>
</feature>
<feature type="modified residue" description="Phosphoserine" evidence="39">
    <location>
        <position position="654"/>
    </location>
</feature>
<feature type="modified residue" description="Phosphoserine" evidence="39">
    <location>
        <position position="658"/>
    </location>
</feature>
<feature type="modified residue" description="Phosphoserine" evidence="21 38 39 40 41 42 44 45">
    <location>
        <position position="664"/>
    </location>
</feature>
<feature type="splice variant" id="VSP_043899" description="In isoform 2." evidence="31">
    <original>Q</original>
    <variation>QGEAGSIAPLRFLFPLRPKKGDCPPFHCQVRQ</variation>
    <location>
        <position position="328"/>
    </location>
</feature>
<feature type="sequence variant" id="VAR_035347" description="In dbSNP:rs33911937.">
    <original>N</original>
    <variation>S</variation>
    <location>
        <position position="348"/>
    </location>
</feature>
<feature type="sequence variant" id="VAR_006175" description="In dbSNP:rs1056998." evidence="29">
    <original>F</original>
    <variation>S</variation>
    <location>
        <position position="375"/>
    </location>
</feature>
<feature type="sequence variant" id="VAR_035348" description="In dbSNP:rs34502209.">
    <original>L</original>
    <variation>F</variation>
    <location>
        <position position="410"/>
    </location>
</feature>
<feature type="sequence variant" id="VAR_046009" description="In dbSNP:rs35891605.">
    <original>R</original>
    <variation>W</variation>
    <location>
        <position position="483"/>
    </location>
</feature>
<feature type="sequence variant" id="VAR_020610" evidence="28">
    <original>M</original>
    <variation>V</variation>
    <location>
        <position position="494"/>
    </location>
</feature>
<feature type="sequence variant" id="VAR_006176" evidence="29">
    <original>V</original>
    <variation>M</variation>
    <location>
        <position position="593"/>
    </location>
</feature>
<feature type="mutagenesis site" description="Loss of phosphorylation." evidence="20">
    <original>S</original>
    <variation>A</variation>
    <location>
        <position position="299"/>
    </location>
</feature>
<feature type="mutagenesis site" description="No effect on kinase activity." evidence="10">
    <original>T</original>
    <variation>A</variation>
    <location>
        <position position="507"/>
    </location>
</feature>
<feature type="sequence conflict" description="In Ref. 2; BAG36031." evidence="34" ref="2">
    <original>K</original>
    <variation>R</variation>
    <location>
        <position position="524"/>
    </location>
</feature>
<feature type="sequence conflict" description="In Ref. 8; no nucleotide entry." evidence="34" ref="8">
    <original>S</original>
    <variation>A</variation>
    <location>
        <position position="533"/>
    </location>
</feature>
<feature type="strand" evidence="46">
    <location>
        <begin position="1"/>
        <end position="13"/>
    </location>
</feature>
<feature type="strand" evidence="46">
    <location>
        <begin position="20"/>
        <end position="23"/>
    </location>
</feature>
<feature type="strand" evidence="46">
    <location>
        <begin position="27"/>
        <end position="38"/>
    </location>
</feature>
<feature type="strand" evidence="46">
    <location>
        <begin position="41"/>
        <end position="45"/>
    </location>
</feature>
<feature type="strand" evidence="46">
    <location>
        <begin position="58"/>
        <end position="62"/>
    </location>
</feature>
<feature type="strand" evidence="46">
    <location>
        <begin position="68"/>
        <end position="76"/>
    </location>
</feature>
<feature type="strand" evidence="46">
    <location>
        <begin position="79"/>
        <end position="87"/>
    </location>
</feature>
<feature type="helix" evidence="46">
    <location>
        <begin position="88"/>
        <end position="96"/>
    </location>
</feature>
<feature type="turn" evidence="46">
    <location>
        <begin position="97"/>
        <end position="100"/>
    </location>
</feature>
<feature type="strand" evidence="46">
    <location>
        <begin position="101"/>
        <end position="107"/>
    </location>
</feature>
<feature type="strand" evidence="46">
    <location>
        <begin position="109"/>
        <end position="111"/>
    </location>
</feature>
<feature type="strand" evidence="46">
    <location>
        <begin position="113"/>
        <end position="123"/>
    </location>
</feature>
<feature type="helix" evidence="47">
    <location>
        <begin position="156"/>
        <end position="158"/>
    </location>
</feature>
<feature type="strand" evidence="47">
    <location>
        <begin position="161"/>
        <end position="164"/>
    </location>
</feature>
<feature type="strand" evidence="47">
    <location>
        <begin position="173"/>
        <end position="175"/>
    </location>
</feature>
<feature type="strand" evidence="47">
    <location>
        <begin position="181"/>
        <end position="183"/>
    </location>
</feature>
<feature type="strand" evidence="47">
    <location>
        <begin position="186"/>
        <end position="189"/>
    </location>
</feature>
<feature type="turn" evidence="47">
    <location>
        <begin position="190"/>
        <end position="192"/>
    </location>
</feature>
<feature type="helix" evidence="47">
    <location>
        <begin position="200"/>
        <end position="202"/>
    </location>
</feature>
<reference key="1">
    <citation type="journal article" date="1993" name="Biochim. Biophys. Acta">
        <title>Molecular and biochemical characterization of a recombinant human PKC-delta family member.</title>
        <authorList>
            <person name="Aris J.P."/>
            <person name="Basta P.V."/>
            <person name="Holmes W.D."/>
            <person name="Ballas L.M."/>
            <person name="Moomaw C."/>
            <person name="Rankl N.B."/>
            <person name="Blobel G."/>
            <person name="Loomis C.R."/>
            <person name="Burns D.J."/>
        </authorList>
    </citation>
    <scope>NUCLEOTIDE SEQUENCE [MRNA] (ISOFORM 1)</scope>
    <scope>VARIANTS SER-375 AND MET-593</scope>
    <source>
        <tissue>Liver</tissue>
    </source>
</reference>
<reference key="2">
    <citation type="journal article" date="2004" name="Nat. Genet.">
        <title>Complete sequencing and characterization of 21,243 full-length human cDNAs.</title>
        <authorList>
            <person name="Ota T."/>
            <person name="Suzuki Y."/>
            <person name="Nishikawa T."/>
            <person name="Otsuki T."/>
            <person name="Sugiyama T."/>
            <person name="Irie R."/>
            <person name="Wakamatsu A."/>
            <person name="Hayashi K."/>
            <person name="Sato H."/>
            <person name="Nagai K."/>
            <person name="Kimura K."/>
            <person name="Makita H."/>
            <person name="Sekine M."/>
            <person name="Obayashi M."/>
            <person name="Nishi T."/>
            <person name="Shibahara T."/>
            <person name="Tanaka T."/>
            <person name="Ishii S."/>
            <person name="Yamamoto J."/>
            <person name="Saito K."/>
            <person name="Kawai Y."/>
            <person name="Isono Y."/>
            <person name="Nakamura Y."/>
            <person name="Nagahari K."/>
            <person name="Murakami K."/>
            <person name="Yasuda T."/>
            <person name="Iwayanagi T."/>
            <person name="Wagatsuma M."/>
            <person name="Shiratori A."/>
            <person name="Sudo H."/>
            <person name="Hosoiri T."/>
            <person name="Kaku Y."/>
            <person name="Kodaira H."/>
            <person name="Kondo H."/>
            <person name="Sugawara M."/>
            <person name="Takahashi M."/>
            <person name="Kanda K."/>
            <person name="Yokoi T."/>
            <person name="Furuya T."/>
            <person name="Kikkawa E."/>
            <person name="Omura Y."/>
            <person name="Abe K."/>
            <person name="Kamihara K."/>
            <person name="Katsuta N."/>
            <person name="Sato K."/>
            <person name="Tanikawa M."/>
            <person name="Yamazaki M."/>
            <person name="Ninomiya K."/>
            <person name="Ishibashi T."/>
            <person name="Yamashita H."/>
            <person name="Murakawa K."/>
            <person name="Fujimori K."/>
            <person name="Tanai H."/>
            <person name="Kimata M."/>
            <person name="Watanabe M."/>
            <person name="Hiraoka S."/>
            <person name="Chiba Y."/>
            <person name="Ishida S."/>
            <person name="Ono Y."/>
            <person name="Takiguchi S."/>
            <person name="Watanabe S."/>
            <person name="Yosida M."/>
            <person name="Hotuta T."/>
            <person name="Kusano J."/>
            <person name="Kanehori K."/>
            <person name="Takahashi-Fujii A."/>
            <person name="Hara H."/>
            <person name="Tanase T.-O."/>
            <person name="Nomura Y."/>
            <person name="Togiya S."/>
            <person name="Komai F."/>
            <person name="Hara R."/>
            <person name="Takeuchi K."/>
            <person name="Arita M."/>
            <person name="Imose N."/>
            <person name="Musashino K."/>
            <person name="Yuuki H."/>
            <person name="Oshima A."/>
            <person name="Sasaki N."/>
            <person name="Aotsuka S."/>
            <person name="Yoshikawa Y."/>
            <person name="Matsunawa H."/>
            <person name="Ichihara T."/>
            <person name="Shiohata N."/>
            <person name="Sano S."/>
            <person name="Moriya S."/>
            <person name="Momiyama H."/>
            <person name="Satoh N."/>
            <person name="Takami S."/>
            <person name="Terashima Y."/>
            <person name="Suzuki O."/>
            <person name="Nakagawa S."/>
            <person name="Senoh A."/>
            <person name="Mizoguchi H."/>
            <person name="Goto Y."/>
            <person name="Shimizu F."/>
            <person name="Wakebe H."/>
            <person name="Hishigaki H."/>
            <person name="Watanabe T."/>
            <person name="Sugiyama A."/>
            <person name="Takemoto M."/>
            <person name="Kawakami B."/>
            <person name="Yamazaki M."/>
            <person name="Watanabe K."/>
            <person name="Kumagai A."/>
            <person name="Itakura S."/>
            <person name="Fukuzumi Y."/>
            <person name="Fujimori Y."/>
            <person name="Komiyama M."/>
            <person name="Tashiro H."/>
            <person name="Tanigami A."/>
            <person name="Fujiwara T."/>
            <person name="Ono T."/>
            <person name="Yamada K."/>
            <person name="Fujii Y."/>
            <person name="Ozaki K."/>
            <person name="Hirao M."/>
            <person name="Ohmori Y."/>
            <person name="Kawabata A."/>
            <person name="Hikiji T."/>
            <person name="Kobatake N."/>
            <person name="Inagaki H."/>
            <person name="Ikema Y."/>
            <person name="Okamoto S."/>
            <person name="Okitani R."/>
            <person name="Kawakami T."/>
            <person name="Noguchi S."/>
            <person name="Itoh T."/>
            <person name="Shigeta K."/>
            <person name="Senba T."/>
            <person name="Matsumura K."/>
            <person name="Nakajima Y."/>
            <person name="Mizuno T."/>
            <person name="Morinaga M."/>
            <person name="Sasaki M."/>
            <person name="Togashi T."/>
            <person name="Oyama M."/>
            <person name="Hata H."/>
            <person name="Watanabe M."/>
            <person name="Komatsu T."/>
            <person name="Mizushima-Sugano J."/>
            <person name="Satoh T."/>
            <person name="Shirai Y."/>
            <person name="Takahashi Y."/>
            <person name="Nakagawa K."/>
            <person name="Okumura K."/>
            <person name="Nagase T."/>
            <person name="Nomura N."/>
            <person name="Kikuchi H."/>
            <person name="Masuho Y."/>
            <person name="Yamashita R."/>
            <person name="Nakai K."/>
            <person name="Yada T."/>
            <person name="Nakamura Y."/>
            <person name="Ohara O."/>
            <person name="Isogai T."/>
            <person name="Sugano S."/>
        </authorList>
    </citation>
    <scope>NUCLEOTIDE SEQUENCE [LARGE SCALE MRNA] (ISOFORM 1)</scope>
</reference>
<reference key="3">
    <citation type="submission" date="2005-07" db="EMBL/GenBank/DDBJ databases">
        <authorList>
            <person name="Mural R.J."/>
            <person name="Istrail S."/>
            <person name="Sutton G.G."/>
            <person name="Florea L."/>
            <person name="Halpern A.L."/>
            <person name="Mobarry C.M."/>
            <person name="Lippert R."/>
            <person name="Walenz B."/>
            <person name="Shatkay H."/>
            <person name="Dew I."/>
            <person name="Miller J.R."/>
            <person name="Flanigan M.J."/>
            <person name="Edwards N.J."/>
            <person name="Bolanos R."/>
            <person name="Fasulo D."/>
            <person name="Halldorsson B.V."/>
            <person name="Hannenhalli S."/>
            <person name="Turner R."/>
            <person name="Yooseph S."/>
            <person name="Lu F."/>
            <person name="Nusskern D.R."/>
            <person name="Shue B.C."/>
            <person name="Zheng X.H."/>
            <person name="Zhong F."/>
            <person name="Delcher A.L."/>
            <person name="Huson D.H."/>
            <person name="Kravitz S.A."/>
            <person name="Mouchard L."/>
            <person name="Reinert K."/>
            <person name="Remington K.A."/>
            <person name="Clark A.G."/>
            <person name="Waterman M.S."/>
            <person name="Eichler E.E."/>
            <person name="Adams M.D."/>
            <person name="Hunkapiller M.W."/>
            <person name="Myers E.W."/>
            <person name="Venter J.C."/>
        </authorList>
    </citation>
    <scope>NUCLEOTIDE SEQUENCE [LARGE SCALE GENOMIC DNA]</scope>
</reference>
<reference key="4">
    <citation type="journal article" date="2004" name="Genome Res.">
        <title>The status, quality, and expansion of the NIH full-length cDNA project: the Mammalian Gene Collection (MGC).</title>
        <authorList>
            <consortium name="The MGC Project Team"/>
        </authorList>
    </citation>
    <scope>NUCLEOTIDE SEQUENCE [LARGE SCALE MRNA] (ISOFORM 1)</scope>
    <source>
        <tissue>Skin</tissue>
    </source>
</reference>
<reference key="5">
    <citation type="submission" date="1993-03" db="EMBL/GenBank/DDBJ databases">
        <title>Partial cDNA Sequence of human protein kinase C delta.</title>
        <authorList>
            <person name="Hug H."/>
        </authorList>
    </citation>
    <scope>NUCLEOTIDE SEQUENCE [MRNA] OF 1-365 (ISOFORM 1)</scope>
    <source>
        <tissue>Hippocampus</tissue>
    </source>
</reference>
<reference key="6">
    <citation type="journal article" date="1997" name="Genes Cells">
        <title>Functional analyses of mammalian protein kinase C isozymes in budding yeast and mammalian fibroblasts.</title>
        <authorList>
            <person name="Nomoto S."/>
            <person name="Watanabe Y."/>
            <person name="Ninomiya-Tsuji J."/>
            <person name="Yang L.-X."/>
            <person name="Kikuchi K."/>
            <person name="Hagiwara M."/>
            <person name="Hidaka H."/>
            <person name="Matsumoto K."/>
            <person name="Irie K."/>
        </authorList>
    </citation>
    <scope>NUCLEOTIDE SEQUENCE [MRNA] OF 51-676 (ISOFORM 1)</scope>
</reference>
<reference key="7">
    <citation type="journal article" date="2008" name="Biochemistry">
        <title>Identification of a novel antiapoptotic human protein kinase C delta isoform, PKCdeltaVIII in NT2 cells.</title>
        <authorList>
            <person name="Jiang K."/>
            <person name="Apostolatos A.H."/>
            <person name="Ghansah T."/>
            <person name="Watson J.E."/>
            <person name="Vickers T."/>
            <person name="Cooper D.R."/>
            <person name="Epling-Burnette P.K."/>
            <person name="Patel N.A."/>
        </authorList>
    </citation>
    <scope>NUCLEOTIDE SEQUENCE [MRNA] OF 224-371 (ISOFORM 2)</scope>
</reference>
<reference key="8">
    <citation type="journal article" date="1994" name="FEBS Lett.">
        <title>Identification of multiple, novel, protein kinase C-related gene products.</title>
        <authorList>
            <person name="Palmer R.H."/>
            <person name="Ridden J."/>
            <person name="Parker P.J."/>
        </authorList>
    </citation>
    <scope>NUCLEOTIDE SEQUENCE [MRNA] OF 432-533 (ISOFORM 1)</scope>
    <scope>VARIANT VAL-494</scope>
</reference>
<reference key="9">
    <citation type="journal article" date="2001" name="J. Cell. Physiol.">
        <title>Regulation of human eosinophil NADPH oxidase activity: a central role for PKCdelta.</title>
        <authorList>
            <person name="Bankers-Fulbright J.L."/>
            <person name="Kita H."/>
            <person name="Gleich G.J."/>
            <person name="O'Grady S.M."/>
        </authorList>
    </citation>
    <scope>FUNCTION</scope>
</reference>
<reference key="10">
    <citation type="journal article" date="2002" name="Biochem. J.">
        <title>Phosphorylation of the protein kinase C-theta activation loop and hydrophobic motif regulates its kinase activity, but only activation loop phosphorylation is critical to in vivo nuclear-factor-kappaB induction.</title>
        <authorList>
            <person name="Liu Y."/>
            <person name="Graham C."/>
            <person name="Li A."/>
            <person name="Fisher R.J."/>
            <person name="Shaw S."/>
        </authorList>
    </citation>
    <scope>MUTAGENESIS OF THR-507</scope>
</reference>
<reference key="11">
    <citation type="journal article" date="2002" name="Biochemistry">
        <title>Regulation of both PDK1 and the phosphorylation of PKC-zeta and -delta by a C-terminal PRK2 fragment.</title>
        <authorList>
            <person name="Hodgkinson C.P."/>
            <person name="Sale G.J."/>
        </authorList>
    </citation>
    <scope>INTERACTION WITH PDPK1</scope>
    <scope>PHOSPHORYLATION</scope>
</reference>
<reference key="12">
    <citation type="journal article" date="2002" name="J. Biol. Chem.">
        <title>Protein kinase C delta regulates function of the DF3/MUC1 carcinoma antigen in beta-catenin signaling.</title>
        <authorList>
            <person name="Ren J."/>
            <person name="Li Y."/>
            <person name="Kufe D."/>
        </authorList>
    </citation>
    <scope>INTERACTION WITH MUC1</scope>
    <scope>FUNCTION</scope>
</reference>
<reference key="13">
    <citation type="journal article" date="2003" name="Cancer Res.">
        <title>Phospholipid scramblase 3 is the mitochondrial target of protein kinase C delta-induced apoptosis.</title>
        <authorList>
            <person name="Liu J."/>
            <person name="Chen J."/>
            <person name="Dai Q."/>
            <person name="Lee R.M."/>
        </authorList>
    </citation>
    <scope>FUNCTION</scope>
    <scope>CATALYTIC ACTIVITY</scope>
    <scope>INTERACTION WITH PLSC3</scope>
    <scope>BIOPHYSICOCHEMICAL PROPERTIES</scope>
    <scope>SUBCELLULAR LOCATION</scope>
</reference>
<reference key="14">
    <citation type="journal article" date="2003" name="EMBO J.">
        <title>Protein kinase Cdelta is responsible for constitutive and DNA damage-induced phosphorylation of Rad9.</title>
        <authorList>
            <person name="Yoshida K."/>
            <person name="Wang H.-G."/>
            <person name="Miki Y."/>
            <person name="Kufe D."/>
        </authorList>
    </citation>
    <scope>INTERACTION WITH RAD9A</scope>
</reference>
<reference key="15">
    <citation type="journal article" date="2005" name="J. Biol. Chem.">
        <title>Roles of tyrosine phosphorylation and cleavage of protein kinase Cdelta in its protective effect against tumor necrosis factor-related apoptosis inducing ligand-induced apoptosis.</title>
        <authorList>
            <person name="Okhrimenko H."/>
            <person name="Lu W."/>
            <person name="Xiang C."/>
            <person name="Ju D."/>
            <person name="Blumberg P.M."/>
            <person name="Gomel R."/>
            <person name="Kazimirsky G."/>
            <person name="Brodie C."/>
        </authorList>
    </citation>
    <scope>FUNCTION</scope>
    <scope>SUBCELLULAR LOCATION</scope>
    <scope>PHOSPHORYLATION AT TYR-155</scope>
</reference>
<reference key="16">
    <citation type="journal article" date="2006" name="Blood">
        <title>PKCdelta regulates collagen-induced platelet aggregation through inhibition of VASP-mediated filopodia formation.</title>
        <authorList>
            <person name="Pula G."/>
            <person name="Schuh K."/>
            <person name="Nakayama K."/>
            <person name="Nakayama K.I."/>
            <person name="Walter U."/>
            <person name="Poole A.W."/>
        </authorList>
    </citation>
    <scope>FUNCTION IN PLATELET AGGREGATION</scope>
    <scope>INTERACTION WITH VASP</scope>
</reference>
<reference key="17">
    <citation type="journal article" date="2007" name="Biochem. J.">
        <title>Coincident regulation of PKCdelta in human platelets by phosphorylation of Tyr311 and Tyr565 and phospholipase C signalling.</title>
        <authorList>
            <person name="Hall K.J."/>
            <person name="Jones M.L."/>
            <person name="Poole A.W."/>
        </authorList>
    </citation>
    <scope>PHOSPHORYLATION AT TYR-313 AND TYR-567</scope>
</reference>
<reference key="18">
    <citation type="journal article" date="2007" name="FEBS Lett.">
        <title>Novel phosphorylation site markers of protein kinase C delta activation.</title>
        <authorList>
            <person name="Durgan J."/>
            <person name="Michael N."/>
            <person name="Totty N."/>
            <person name="Parker P.J."/>
        </authorList>
    </citation>
    <scope>SUBCELLULAR LOCATION</scope>
    <scope>AUTOPHOSPHORYLATION</scope>
    <scope>PHOSPHORYLATION AT SER-299; SER-302 AND SER-304</scope>
    <scope>MUTAGENESIS OF SER-299</scope>
</reference>
<reference key="19">
    <citation type="journal article" date="2007" name="J. Biol. Chem.">
        <title>Activation of acid sphingomyelinase by protein kinase Cdelta-mediated phosphorylation.</title>
        <authorList>
            <person name="Zeidan Y.H."/>
            <person name="Hannun Y.A."/>
        </authorList>
    </citation>
    <scope>FUNCTION</scope>
    <scope>SUBCELLULAR LOCATION</scope>
</reference>
<reference key="20">
    <citation type="journal article" date="2007" name="Mol. Cancer Res.">
        <title>The localization of protein kinase Cdelta in different subcellular sites affects its proapoptotic and antiapoptotic functions and the activation of distinct downstream signaling pathways.</title>
        <authorList>
            <person name="Gomel R."/>
            <person name="Xiang C."/>
            <person name="Finniss S."/>
            <person name="Lee H.K."/>
            <person name="Lu W."/>
            <person name="Okhrimenko H."/>
            <person name="Brodie C."/>
        </authorList>
    </citation>
    <scope>SUBCELLULAR LOCATION</scope>
</reference>
<reference key="21">
    <citation type="journal article" date="2007" name="Protein Sci.">
        <title>Protein kinase C delta is phosphorylated on five novel Ser/Thr sites following inducible overexpression in human colorectal cancer cells.</title>
        <authorList>
            <person name="Welman A."/>
            <person name="Griffiths J.R."/>
            <person name="Whetton A.D."/>
            <person name="Dive C."/>
        </authorList>
    </citation>
    <scope>PHOSPHORYLATION AT THR-50; THR-141; SER-304; THR-451; SER-506; THR-507 AND SER-664</scope>
    <scope>IDENTIFICATION BY MASS SPECTROMETRY</scope>
</reference>
<reference key="22">
    <citation type="journal article" date="2008" name="J. Proteome Res.">
        <title>Phosphoproteome of resting human platelets.</title>
        <authorList>
            <person name="Zahedi R.P."/>
            <person name="Lewandrowski U."/>
            <person name="Wiesner J."/>
            <person name="Wortelkamp S."/>
            <person name="Moebius J."/>
            <person name="Schuetz C."/>
            <person name="Walter U."/>
            <person name="Gambaryan S."/>
            <person name="Sickmann A."/>
        </authorList>
    </citation>
    <scope>IDENTIFICATION BY MASS SPECTROMETRY [LARGE SCALE ANALYSIS]</scope>
    <source>
        <tissue>Platelet</tissue>
    </source>
</reference>
<reference key="23">
    <citation type="journal article" date="2008" name="Mol. Cell">
        <title>Kinase-selective enrichment enables quantitative phosphoproteomics of the kinome across the cell cycle.</title>
        <authorList>
            <person name="Daub H."/>
            <person name="Olsen J.V."/>
            <person name="Bairlein M."/>
            <person name="Gnad F."/>
            <person name="Oppermann F.S."/>
            <person name="Korner R."/>
            <person name="Greff Z."/>
            <person name="Keri G."/>
            <person name="Stemmann O."/>
            <person name="Mann M."/>
        </authorList>
    </citation>
    <scope>PHOSPHORYLATION [LARGE SCALE ANALYSIS] AT SER-299; TYR-313; SER-503; SER-654; SER-658 AND SER-664</scope>
    <scope>IDENTIFICATION BY MASS SPECTROMETRY [LARGE SCALE ANALYSIS]</scope>
    <source>
        <tissue>Cervix carcinoma</tissue>
    </source>
</reference>
<reference key="24">
    <citation type="journal article" date="2008" name="Mol. Cell. Biol.">
        <title>Posttranslational modification of the AU-rich element binding protein HuR by protein kinase Cdelta elicits angiotensin II-induced stabilization and nuclear export of cyclooxygenase 2 mRNA.</title>
        <authorList>
            <person name="Doller A."/>
            <person name="Akool E.-S."/>
            <person name="Huwiler A."/>
            <person name="Mueller R."/>
            <person name="Radeke H.H."/>
            <person name="Pfeilschifter J."/>
            <person name="Eberhardt W."/>
        </authorList>
    </citation>
    <scope>FUNCTION</scope>
    <scope>CATALYTIC ACTIVITY</scope>
    <scope>SUBCELLULAR LOCATION</scope>
</reference>
<reference key="25">
    <citation type="journal article" date="2008" name="Proc. Natl. Acad. Sci. U.S.A.">
        <title>A quantitative atlas of mitotic phosphorylation.</title>
        <authorList>
            <person name="Dephoure N."/>
            <person name="Zhou C."/>
            <person name="Villen J."/>
            <person name="Beausoleil S.A."/>
            <person name="Bakalarski C.E."/>
            <person name="Elledge S.J."/>
            <person name="Gygi S.P."/>
        </authorList>
    </citation>
    <scope>PHOSPHORYLATION [LARGE SCALE ANALYSIS] AT SER-130; SER-302; SER-304; SER-307 AND SER-664</scope>
    <scope>IDENTIFICATION BY MASS SPECTROMETRY [LARGE SCALE ANALYSIS]</scope>
    <source>
        <tissue>Cervix carcinoma</tissue>
    </source>
</reference>
<reference key="26">
    <citation type="journal article" date="2009" name="Anal. Chem.">
        <title>Lys-N and trypsin cover complementary parts of the phosphoproteome in a refined SCX-based approach.</title>
        <authorList>
            <person name="Gauci S."/>
            <person name="Helbig A.O."/>
            <person name="Slijper M."/>
            <person name="Krijgsveld J."/>
            <person name="Heck A.J."/>
            <person name="Mohammed S."/>
        </authorList>
    </citation>
    <scope>IDENTIFICATION BY MASS SPECTROMETRY [LARGE SCALE ANALYSIS]</scope>
</reference>
<reference key="27">
    <citation type="journal article" date="2009" name="Blood">
        <title>Lyn, PKC-delta, SHIP-1 interactions regulate GPVI-mediated platelet-dense granule secretion.</title>
        <authorList>
            <person name="Chari R."/>
            <person name="Kim S."/>
            <person name="Murugappan S."/>
            <person name="Sanjay A."/>
            <person name="Daniel J.L."/>
            <person name="Kunapuli S.P."/>
        </authorList>
    </citation>
    <scope>FUNCTION IN PLATELET RESPONSE</scope>
</reference>
<reference key="28">
    <citation type="journal article" date="2009" name="Mol. Cell. Proteomics">
        <title>Large-scale proteomics analysis of the human kinome.</title>
        <authorList>
            <person name="Oppermann F.S."/>
            <person name="Gnad F."/>
            <person name="Olsen J.V."/>
            <person name="Hornberger R."/>
            <person name="Greff Z."/>
            <person name="Keri G."/>
            <person name="Mann M."/>
            <person name="Daub H."/>
        </authorList>
    </citation>
    <scope>PHOSPHORYLATION [LARGE SCALE ANALYSIS] AT THR-218; TYR-313 AND SER-664</scope>
    <scope>IDENTIFICATION BY MASS SPECTROMETRY [LARGE SCALE ANALYSIS]</scope>
</reference>
<reference key="29">
    <citation type="journal article" date="2009" name="Sci. Signal.">
        <title>Quantitative phosphoproteomic analysis of T cell receptor signaling reveals system-wide modulation of protein-protein interactions.</title>
        <authorList>
            <person name="Mayya V."/>
            <person name="Lundgren D.H."/>
            <person name="Hwang S.-I."/>
            <person name="Rezaul K."/>
            <person name="Wu L."/>
            <person name="Eng J.K."/>
            <person name="Rodionov V."/>
            <person name="Han D.K."/>
        </authorList>
    </citation>
    <scope>PHOSPHORYLATION [LARGE SCALE ANALYSIS] AT TYR-313 AND SER-664</scope>
    <scope>IDENTIFICATION BY MASS SPECTROMETRY [LARGE SCALE ANALYSIS]</scope>
    <source>
        <tissue>Leukemic T-cell</tissue>
    </source>
</reference>
<reference key="30">
    <citation type="journal article" date="2010" name="J. Leukoc. Biol.">
        <title>Regulation of TNF-induced oxygen radical production in human neutrophils: role of delta-PKC.</title>
        <authorList>
            <person name="Kilpatrick L.E."/>
            <person name="Sun S."/>
            <person name="Li H."/>
            <person name="Vary T.C."/>
            <person name="Korchak H.M."/>
        </authorList>
    </citation>
    <scope>FUNCTION IN PHOSPHORYLATION OF NCF1</scope>
    <scope>PHOSPHORYLATION AT THR-507 AND SER-645</scope>
</reference>
<reference key="31">
    <citation type="journal article" date="2002" name="J. Biochem.">
        <title>Protein kinase C delta (PKC delta): activation mechanisms and functions.</title>
        <authorList>
            <person name="Kikkawa U."/>
            <person name="Matsuzaki H."/>
            <person name="Yamamoto T."/>
        </authorList>
    </citation>
    <scope>REVIEW ON FUNCTION</scope>
</reference>
<reference key="32">
    <citation type="journal article" date="2010" name="J. Thromb. Haemost.">
        <title>Diverse functions of protein kinase C isoforms in platelet activation and thrombus formation.</title>
        <authorList>
            <person name="Harper M.T."/>
            <person name="Poole A.W."/>
        </authorList>
    </citation>
    <scope>REVIEW ON FUNCTION</scope>
</reference>
<reference key="33">
    <citation type="journal article" date="2010" name="Sci. Signal.">
        <title>Quantitative phosphoproteomics reveals widespread full phosphorylation site occupancy during mitosis.</title>
        <authorList>
            <person name="Olsen J.V."/>
            <person name="Vermeulen M."/>
            <person name="Santamaria A."/>
            <person name="Kumar C."/>
            <person name="Miller M.L."/>
            <person name="Jensen L.J."/>
            <person name="Gnad F."/>
            <person name="Cox J."/>
            <person name="Jensen T.S."/>
            <person name="Nigg E.A."/>
            <person name="Brunak S."/>
            <person name="Mann M."/>
        </authorList>
    </citation>
    <scope>PHOSPHORYLATION [LARGE SCALE ANALYSIS] AT SER-304; TYR-374; SER-645 AND SER-664</scope>
    <scope>IDENTIFICATION BY MASS SPECTROMETRY [LARGE SCALE ANALYSIS]</scope>
    <source>
        <tissue>Cervix carcinoma</tissue>
    </source>
</reference>
<reference key="34">
    <citation type="journal article" date="2010" name="ScientificWorldJournal">
        <title>Two faces of protein kinase Cdelta: the contrasting roles of PKCdelta in cell survival and cell death.</title>
        <authorList>
            <person name="Basu A."/>
            <person name="Pal D."/>
        </authorList>
    </citation>
    <scope>REVIEW ON FUNCTION</scope>
</reference>
<reference key="35">
    <citation type="journal article" date="2011" name="BMC Syst. Biol.">
        <title>Initial characterization of the human central proteome.</title>
        <authorList>
            <person name="Burkard T.R."/>
            <person name="Planyavsky M."/>
            <person name="Kaupe I."/>
            <person name="Breitwieser F.P."/>
            <person name="Buerckstuemmer T."/>
            <person name="Bennett K.L."/>
            <person name="Superti-Furga G."/>
            <person name="Colinge J."/>
        </authorList>
    </citation>
    <scope>IDENTIFICATION BY MASS SPECTROMETRY [LARGE SCALE ANALYSIS]</scope>
</reference>
<reference key="36">
    <citation type="journal article" date="2011" name="J. Mol. Cell. Cardiol.">
        <title>PKC-delta and PKC-epsilon: Foes of the same family or strangers?</title>
        <authorList>
            <person name="Duquesnes N."/>
            <person name="Lezoualc'h F."/>
            <person name="Crozatier B."/>
        </authorList>
    </citation>
    <scope>REVIEW ON FUNCTION</scope>
</reference>
<reference key="37">
    <citation type="journal article" date="2011" name="Sci. Signal.">
        <title>System-wide temporal characterization of the proteome and phosphoproteome of human embryonic stem cell differentiation.</title>
        <authorList>
            <person name="Rigbolt K.T."/>
            <person name="Prokhorova T.A."/>
            <person name="Akimov V."/>
            <person name="Henningsen J."/>
            <person name="Johansen P.T."/>
            <person name="Kratchmarova I."/>
            <person name="Kassem M."/>
            <person name="Mann M."/>
            <person name="Olsen J.V."/>
            <person name="Blagoev B."/>
        </authorList>
    </citation>
    <scope>PHOSPHORYLATION [LARGE SCALE ANALYSIS] AT SER-304 AND SER-645</scope>
    <scope>IDENTIFICATION BY MASS SPECTROMETRY [LARGE SCALE ANALYSIS]</scope>
</reference>
<reference key="38">
    <citation type="journal article" date="2012" name="Arch. Immunol. Ther. Exp.">
        <title>Protein kinase cdelta in apoptosis: a brief overview.</title>
        <authorList>
            <person name="Zhao M."/>
            <person name="Xia L."/>
            <person name="Chen G.Q."/>
        </authorList>
    </citation>
    <scope>REVIEW</scope>
</reference>
<reference key="39">
    <citation type="journal article" date="2013" name="Blood">
        <title>B-cell deficiency and severe autoimmunity caused by deficiency of protein kinase C delta.</title>
        <authorList>
            <person name="Salzer E."/>
            <person name="Santos-Valente E."/>
            <person name="Klaver S."/>
            <person name="Ban S.A."/>
            <person name="Emminger W."/>
            <person name="Prengemann N.K."/>
            <person name="Garncarz W."/>
            <person name="Mullauer L."/>
            <person name="Kain R."/>
            <person name="Boztug H."/>
            <person name="Heitger A."/>
            <person name="Arbeiter K."/>
            <person name="Eitelberger F."/>
            <person name="Seidel M.G."/>
            <person name="Holter W."/>
            <person name="Pollak A."/>
            <person name="Pickl W.F."/>
            <person name="Forster-Waldl E."/>
            <person name="Boztug K."/>
        </authorList>
    </citation>
    <scope>INVOLVEMENT IN ALPS3</scope>
</reference>
<reference key="40">
    <citation type="journal article" date="2013" name="J. Proteome Res.">
        <title>Toward a comprehensive characterization of a human cancer cell phosphoproteome.</title>
        <authorList>
            <person name="Zhou H."/>
            <person name="Di Palma S."/>
            <person name="Preisinger C."/>
            <person name="Peng M."/>
            <person name="Polat A.N."/>
            <person name="Heck A.J."/>
            <person name="Mohammed S."/>
        </authorList>
    </citation>
    <scope>PHOSPHORYLATION [LARGE SCALE ANALYSIS] AT THR-141; SER-299; SER-302; SER-304; SER-307; SER-503 AND SER-664</scope>
    <scope>IDENTIFICATION BY MASS SPECTROMETRY [LARGE SCALE ANALYSIS]</scope>
    <source>
        <tissue>Cervix carcinoma</tissue>
        <tissue>Erythroleukemia</tissue>
    </source>
</reference>
<reference key="41">
    <citation type="journal article" date="2014" name="J. Proteomics">
        <title>An enzyme assisted RP-RPLC approach for in-depth analysis of human liver phosphoproteome.</title>
        <authorList>
            <person name="Bian Y."/>
            <person name="Song C."/>
            <person name="Cheng K."/>
            <person name="Dong M."/>
            <person name="Wang F."/>
            <person name="Huang J."/>
            <person name="Sun D."/>
            <person name="Wang L."/>
            <person name="Ye M."/>
            <person name="Zou H."/>
        </authorList>
    </citation>
    <scope>PHOSPHORYLATION [LARGE SCALE ANALYSIS] AT SER-664</scope>
    <scope>IDENTIFICATION BY MASS SPECTROMETRY [LARGE SCALE ANALYSIS]</scope>
    <source>
        <tissue>Liver</tissue>
    </source>
</reference>
<reference key="42">
    <citation type="journal article" date="2017" name="Sci. Rep.">
        <title>Differential regulation of PKD isoforms in oxidative stress conditions through phosphorylation of a conserved Tyr in the P+1 loop.</title>
        <authorList>
            <person name="Cobbaut M."/>
            <person name="Derua R."/>
            <person name="Doeppler H."/>
            <person name="Lou H.J."/>
            <person name="Vandoninck S."/>
            <person name="Storz P."/>
            <person name="Turk B.E."/>
            <person name="Seufferlein T."/>
            <person name="Waelkens E."/>
            <person name="Janssens V."/>
            <person name="Van Lint J."/>
        </authorList>
    </citation>
    <scope>INTERACTION WITH PRKD2</scope>
</reference>
<reference key="43">
    <citation type="journal article" date="2021" name="Proc. Natl. Acad. Sci. U.S.A.">
        <title>Unraveling the hidden role of a uORF-encoded peptide as a kinase inhibitor of PKCs.</title>
        <authorList>
            <person name="Jayaram D.R."/>
            <person name="Frost S."/>
            <person name="Argov C."/>
            <person name="Liju V.B."/>
            <person name="Anto N.P."/>
            <person name="Muraleedharan A."/>
            <person name="Ben-Ari A."/>
            <person name="Sinay R."/>
            <person name="Smoly I."/>
            <person name="Novoplansky O."/>
            <person name="Isakov N."/>
            <person name="Toiber D."/>
            <person name="Keasar C."/>
            <person name="Elkabets M."/>
            <person name="Yeger-Lotem E."/>
            <person name="Livneh E."/>
        </authorList>
    </citation>
    <scope>CATALYTIC ACTIVITY</scope>
    <scope>ACTIVITY REGULATION</scope>
    <scope>INTERACTION WITH PRKCH UPSTREAM OPEN READING FRAME 2</scope>
</reference>
<reference key="44">
    <citation type="journal article" date="2005" name="Cell">
        <title>The C2 domain of PKCdelta is a phosphotyrosine binding domain.</title>
        <authorList>
            <person name="Benes C.H."/>
            <person name="Wu N."/>
            <person name="Elia A.E.H."/>
            <person name="Dharia T."/>
            <person name="Cantley L.C."/>
            <person name="Soltoff S.P."/>
        </authorList>
    </citation>
    <scope>X-RAY CRYSTALLOGRAPHY (1.7 ANGSTROMS) OF 1-123 IN COMPLEX WITH PHOSPHOTYROSINE-CONTAINING PEPTIDE</scope>
    <scope>INTERACTION WITH CDCP1</scope>
</reference>
<reference key="45">
    <citation type="submission" date="2008-04" db="PDB data bank">
        <title>Solution structure of the first phorbol esters/diacylglycerol binding domain of human protein kinase C, delta.</title>
        <authorList>
            <consortium name="RIKEN structural genomics initiative (RSGI)"/>
        </authorList>
    </citation>
    <scope>STRUCTURE BY NMR OF 149-218</scope>
</reference>
<evidence type="ECO:0000250" key="1"/>
<evidence type="ECO:0000250" key="2">
    <source>
        <dbReference type="UniProtKB" id="P09215"/>
    </source>
</evidence>
<evidence type="ECO:0000250" key="3">
    <source>
        <dbReference type="UniProtKB" id="P28867"/>
    </source>
</evidence>
<evidence type="ECO:0000255" key="4">
    <source>
        <dbReference type="PROSITE-ProRule" id="PRU00041"/>
    </source>
</evidence>
<evidence type="ECO:0000255" key="5">
    <source>
        <dbReference type="PROSITE-ProRule" id="PRU00159"/>
    </source>
</evidence>
<evidence type="ECO:0000255" key="6">
    <source>
        <dbReference type="PROSITE-ProRule" id="PRU00226"/>
    </source>
</evidence>
<evidence type="ECO:0000255" key="7">
    <source>
        <dbReference type="PROSITE-ProRule" id="PRU00618"/>
    </source>
</evidence>
<evidence type="ECO:0000255" key="8">
    <source>
        <dbReference type="PROSITE-ProRule" id="PRU10027"/>
    </source>
</evidence>
<evidence type="ECO:0000269" key="9">
    <source>
    </source>
</evidence>
<evidence type="ECO:0000269" key="10">
    <source>
    </source>
</evidence>
<evidence type="ECO:0000269" key="11">
    <source>
    </source>
</evidence>
<evidence type="ECO:0000269" key="12">
    <source>
    </source>
</evidence>
<evidence type="ECO:0000269" key="13">
    <source>
    </source>
</evidence>
<evidence type="ECO:0000269" key="14">
    <source>
    </source>
</evidence>
<evidence type="ECO:0000269" key="15">
    <source>
    </source>
</evidence>
<evidence type="ECO:0000269" key="16">
    <source>
    </source>
</evidence>
<evidence type="ECO:0000269" key="17">
    <source>
    </source>
</evidence>
<evidence type="ECO:0000269" key="18">
    <source>
    </source>
</evidence>
<evidence type="ECO:0000269" key="19">
    <source>
    </source>
</evidence>
<evidence type="ECO:0000269" key="20">
    <source>
    </source>
</evidence>
<evidence type="ECO:0000269" key="21">
    <source>
    </source>
</evidence>
<evidence type="ECO:0000269" key="22">
    <source>
    </source>
</evidence>
<evidence type="ECO:0000269" key="23">
    <source>
    </source>
</evidence>
<evidence type="ECO:0000269" key="24">
    <source>
    </source>
</evidence>
<evidence type="ECO:0000269" key="25">
    <source>
    </source>
</evidence>
<evidence type="ECO:0000269" key="26">
    <source>
    </source>
</evidence>
<evidence type="ECO:0000269" key="27">
    <source>
    </source>
</evidence>
<evidence type="ECO:0000269" key="28">
    <source>
    </source>
</evidence>
<evidence type="ECO:0000269" key="29">
    <source>
    </source>
</evidence>
<evidence type="ECO:0000303" key="30">
    <source>
    </source>
</evidence>
<evidence type="ECO:0000303" key="31">
    <source>
    </source>
</evidence>
<evidence type="ECO:0000303" key="32">
    <source>
    </source>
</evidence>
<evidence type="ECO:0000303" key="33">
    <source>
    </source>
</evidence>
<evidence type="ECO:0000305" key="34"/>
<evidence type="ECO:0000305" key="35">
    <source>
    </source>
</evidence>
<evidence type="ECO:0000305" key="36">
    <source>
    </source>
</evidence>
<evidence type="ECO:0000312" key="37">
    <source>
        <dbReference type="HGNC" id="HGNC:9399"/>
    </source>
</evidence>
<evidence type="ECO:0007744" key="38">
    <source>
    </source>
</evidence>
<evidence type="ECO:0007744" key="39">
    <source>
    </source>
</evidence>
<evidence type="ECO:0007744" key="40">
    <source>
    </source>
</evidence>
<evidence type="ECO:0007744" key="41">
    <source>
    </source>
</evidence>
<evidence type="ECO:0007744" key="42">
    <source>
    </source>
</evidence>
<evidence type="ECO:0007744" key="43">
    <source>
    </source>
</evidence>
<evidence type="ECO:0007744" key="44">
    <source>
    </source>
</evidence>
<evidence type="ECO:0007744" key="45">
    <source>
    </source>
</evidence>
<evidence type="ECO:0007829" key="46">
    <source>
        <dbReference type="PDB" id="1YRK"/>
    </source>
</evidence>
<evidence type="ECO:0007829" key="47">
    <source>
        <dbReference type="PDB" id="2YUU"/>
    </source>
</evidence>
<dbReference type="EC" id="2.7.11.13" evidence="14 22 27"/>
<dbReference type="EC" id="2.7.10.2"/>
<dbReference type="EMBL" id="L07860">
    <property type="protein sequence ID" value="AAA03176.1"/>
    <property type="molecule type" value="mRNA"/>
</dbReference>
<dbReference type="EMBL" id="L07861">
    <property type="protein sequence ID" value="AAA03175.1"/>
    <property type="molecule type" value="mRNA"/>
</dbReference>
<dbReference type="EMBL" id="AK313216">
    <property type="protein sequence ID" value="BAG36031.1"/>
    <property type="molecule type" value="mRNA"/>
</dbReference>
<dbReference type="EMBL" id="CH471055">
    <property type="protein sequence ID" value="EAW65279.1"/>
    <property type="molecule type" value="Genomic_DNA"/>
</dbReference>
<dbReference type="EMBL" id="BC043350">
    <property type="protein sequence ID" value="AAH43350.1"/>
    <property type="molecule type" value="mRNA"/>
</dbReference>
<dbReference type="EMBL" id="Z22521">
    <property type="protein sequence ID" value="CAA80249.1"/>
    <property type="molecule type" value="mRNA"/>
</dbReference>
<dbReference type="EMBL" id="D10495">
    <property type="protein sequence ID" value="BAA01381.1"/>
    <property type="molecule type" value="mRNA"/>
</dbReference>
<dbReference type="EMBL" id="DQ516383">
    <property type="protein sequence ID" value="ABF68960.1"/>
    <property type="molecule type" value="mRNA"/>
</dbReference>
<dbReference type="CCDS" id="CCDS2870.1">
    <molecule id="Q05655-1"/>
</dbReference>
<dbReference type="PIR" id="S35704">
    <property type="entry name" value="S35704"/>
</dbReference>
<dbReference type="RefSeq" id="NP_001303256.1">
    <molecule id="Q05655-1"/>
    <property type="nucleotide sequence ID" value="NM_001316327.2"/>
</dbReference>
<dbReference type="RefSeq" id="NP_001341608.1">
    <molecule id="Q05655-1"/>
    <property type="nucleotide sequence ID" value="NM_001354679.2"/>
</dbReference>
<dbReference type="RefSeq" id="NP_001341609.1">
    <molecule id="Q05655-1"/>
    <property type="nucleotide sequence ID" value="NM_001354680.2"/>
</dbReference>
<dbReference type="RefSeq" id="NP_006245.2">
    <molecule id="Q05655-1"/>
    <property type="nucleotide sequence ID" value="NM_006254.3"/>
</dbReference>
<dbReference type="RefSeq" id="NP_997704.1">
    <molecule id="Q05655-1"/>
    <property type="nucleotide sequence ID" value="NM_212539.2"/>
</dbReference>
<dbReference type="RefSeq" id="XP_006713322.1">
    <property type="nucleotide sequence ID" value="XM_006713259.2"/>
</dbReference>
<dbReference type="RefSeq" id="XP_016862344.1">
    <property type="nucleotide sequence ID" value="XM_017006855.1"/>
</dbReference>
<dbReference type="RefSeq" id="XP_016862345.1">
    <property type="nucleotide sequence ID" value="XM_017006856.1"/>
</dbReference>
<dbReference type="RefSeq" id="XP_047304520.1">
    <molecule id="Q05655-1"/>
    <property type="nucleotide sequence ID" value="XM_047448564.1"/>
</dbReference>
<dbReference type="PDB" id="1YRK">
    <property type="method" value="X-ray"/>
    <property type="resolution" value="1.70 A"/>
    <property type="chains" value="A=1-123"/>
</dbReference>
<dbReference type="PDB" id="2YUU">
    <property type="method" value="NMR"/>
    <property type="chains" value="A=149-218"/>
</dbReference>
<dbReference type="PDBsum" id="1YRK"/>
<dbReference type="PDBsum" id="2YUU"/>
<dbReference type="SMR" id="Q05655"/>
<dbReference type="BioGRID" id="111566">
    <property type="interactions" value="180"/>
</dbReference>
<dbReference type="CORUM" id="Q05655"/>
<dbReference type="DIP" id="DIP-29954N"/>
<dbReference type="ELM" id="Q05655"/>
<dbReference type="FunCoup" id="Q05655">
    <property type="interactions" value="1567"/>
</dbReference>
<dbReference type="IntAct" id="Q05655">
    <property type="interactions" value="73"/>
</dbReference>
<dbReference type="MINT" id="Q05655"/>
<dbReference type="STRING" id="9606.ENSP00000331602"/>
<dbReference type="BindingDB" id="Q05655"/>
<dbReference type="ChEMBL" id="CHEMBL2996"/>
<dbReference type="DrugBank" id="DB04376">
    <property type="generic name" value="13-Acetylphorbol"/>
</dbReference>
<dbReference type="DrugBank" id="DB09096">
    <property type="generic name" value="Benzoyl peroxide"/>
</dbReference>
<dbReference type="DrugBank" id="DB05560">
    <property type="generic name" value="Delcasertib"/>
</dbReference>
<dbReference type="DrugBank" id="DB04209">
    <property type="generic name" value="Dequalinium"/>
</dbReference>
<dbReference type="DrugBank" id="DB12010">
    <property type="generic name" value="Fostamatinib"/>
</dbReference>
<dbReference type="DrugBank" id="DB05013">
    <property type="generic name" value="Ingenol mebutate"/>
</dbReference>
<dbReference type="DrugBank" id="DB02010">
    <property type="generic name" value="Staurosporine"/>
</dbReference>
<dbReference type="DrugBank" id="DB00675">
    <property type="generic name" value="Tamoxifen"/>
</dbReference>
<dbReference type="DrugCentral" id="Q05655"/>
<dbReference type="GuidetoPHARMACOLOGY" id="1485"/>
<dbReference type="iPTMnet" id="Q05655"/>
<dbReference type="PhosphoSitePlus" id="Q05655"/>
<dbReference type="SwissPalm" id="Q05655"/>
<dbReference type="BioMuta" id="PRKCD"/>
<dbReference type="DMDM" id="205371776"/>
<dbReference type="CPTAC" id="CPTAC-1743"/>
<dbReference type="CPTAC" id="CPTAC-2853"/>
<dbReference type="CPTAC" id="CPTAC-2854"/>
<dbReference type="jPOST" id="Q05655"/>
<dbReference type="MassIVE" id="Q05655"/>
<dbReference type="PaxDb" id="9606-ENSP00000378217"/>
<dbReference type="PeptideAtlas" id="Q05655"/>
<dbReference type="ProteomicsDB" id="58342">
    <molecule id="Q05655-1"/>
</dbReference>
<dbReference type="ProteomicsDB" id="58343">
    <molecule id="Q05655-2"/>
</dbReference>
<dbReference type="Pumba" id="Q05655"/>
<dbReference type="Antibodypedia" id="664">
    <property type="antibodies" value="1169 antibodies from 46 providers"/>
</dbReference>
<dbReference type="DNASU" id="5580"/>
<dbReference type="Ensembl" id="ENST00000330452.8">
    <molecule id="Q05655-1"/>
    <property type="protein sequence ID" value="ENSP00000331602.3"/>
    <property type="gene ID" value="ENSG00000163932.16"/>
</dbReference>
<dbReference type="Ensembl" id="ENST00000394729.6">
    <molecule id="Q05655-1"/>
    <property type="protein sequence ID" value="ENSP00000378217.2"/>
    <property type="gene ID" value="ENSG00000163932.16"/>
</dbReference>
<dbReference type="Ensembl" id="ENST00000650739.1">
    <molecule id="Q05655-1"/>
    <property type="protein sequence ID" value="ENSP00000498623.1"/>
    <property type="gene ID" value="ENSG00000163932.16"/>
</dbReference>
<dbReference type="Ensembl" id="ENST00000652449.1">
    <molecule id="Q05655-1"/>
    <property type="protein sequence ID" value="ENSP00000498400.1"/>
    <property type="gene ID" value="ENSG00000163932.16"/>
</dbReference>
<dbReference type="Ensembl" id="ENST00000654719.1">
    <molecule id="Q05655-1"/>
    <property type="protein sequence ID" value="ENSP00000499558.1"/>
    <property type="gene ID" value="ENSG00000163932.16"/>
</dbReference>
<dbReference type="GeneID" id="5580"/>
<dbReference type="KEGG" id="hsa:5580"/>
<dbReference type="MANE-Select" id="ENST00000330452.8">
    <property type="protein sequence ID" value="ENSP00000331602.3"/>
    <property type="RefSeq nucleotide sequence ID" value="NM_006254.4"/>
    <property type="RefSeq protein sequence ID" value="NP_006245.2"/>
</dbReference>
<dbReference type="UCSC" id="uc003dgl.4">
    <molecule id="Q05655-1"/>
    <property type="organism name" value="human"/>
</dbReference>
<dbReference type="AGR" id="HGNC:9399"/>
<dbReference type="CTD" id="5580"/>
<dbReference type="DisGeNET" id="5580"/>
<dbReference type="GeneCards" id="PRKCD"/>
<dbReference type="HGNC" id="HGNC:9399">
    <property type="gene designation" value="PRKCD"/>
</dbReference>
<dbReference type="HPA" id="ENSG00000163932">
    <property type="expression patterns" value="Low tissue specificity"/>
</dbReference>
<dbReference type="MalaCards" id="PRKCD"/>
<dbReference type="MIM" id="176977">
    <property type="type" value="gene"/>
</dbReference>
<dbReference type="MIM" id="615559">
    <property type="type" value="phenotype"/>
</dbReference>
<dbReference type="neXtProt" id="NX_Q05655"/>
<dbReference type="OpenTargets" id="ENSG00000163932"/>
<dbReference type="Orphanet" id="664711">
    <property type="disease" value="EBV-induced lymphoproliferative disease due to PRKCD deficiency"/>
</dbReference>
<dbReference type="PharmGKB" id="PA33763"/>
<dbReference type="VEuPathDB" id="HostDB:ENSG00000163932"/>
<dbReference type="eggNOG" id="KOG0694">
    <property type="taxonomic scope" value="Eukaryota"/>
</dbReference>
<dbReference type="GeneTree" id="ENSGT00940000155327"/>
<dbReference type="HOGENOM" id="CLU_000288_54_4_1"/>
<dbReference type="InParanoid" id="Q05655"/>
<dbReference type="OMA" id="FKTINWI"/>
<dbReference type="OrthoDB" id="63267at2759"/>
<dbReference type="PAN-GO" id="Q05655">
    <property type="GO annotations" value="3 GO annotations based on evolutionary models"/>
</dbReference>
<dbReference type="PhylomeDB" id="Q05655"/>
<dbReference type="TreeFam" id="TF102004"/>
<dbReference type="BRENDA" id="2.7.11.13">
    <property type="organism ID" value="2681"/>
</dbReference>
<dbReference type="PathwayCommons" id="Q05655"/>
<dbReference type="Reactome" id="R-HSA-111465">
    <property type="pathway name" value="Apoptotic cleavage of cellular proteins"/>
</dbReference>
<dbReference type="Reactome" id="R-HSA-111933">
    <property type="pathway name" value="Calmodulin induced events"/>
</dbReference>
<dbReference type="Reactome" id="R-HSA-114508">
    <property type="pathway name" value="Effects of PIP2 hydrolysis"/>
</dbReference>
<dbReference type="Reactome" id="R-HSA-1250196">
    <property type="pathway name" value="SHC1 events in ERBB2 signaling"/>
</dbReference>
<dbReference type="Reactome" id="R-HSA-1489509">
    <property type="pathway name" value="DAG and IP3 signaling"/>
</dbReference>
<dbReference type="Reactome" id="R-HSA-2029485">
    <property type="pathway name" value="Role of phospholipids in phagocytosis"/>
</dbReference>
<dbReference type="Reactome" id="R-HSA-418597">
    <property type="pathway name" value="G alpha (z) signalling events"/>
</dbReference>
<dbReference type="Reactome" id="R-HSA-450520">
    <property type="pathway name" value="HuR (ELAVL1) binds and stabilizes mRNA"/>
</dbReference>
<dbReference type="Reactome" id="R-HSA-5218921">
    <property type="pathway name" value="VEGFR2 mediated cell proliferation"/>
</dbReference>
<dbReference type="Reactome" id="R-HSA-5607764">
    <property type="pathway name" value="CLEC7A (Dectin-1) signaling"/>
</dbReference>
<dbReference type="Reactome" id="R-HSA-5668599">
    <property type="pathway name" value="RHO GTPases Activate NADPH Oxidases"/>
</dbReference>
<dbReference type="Reactome" id="R-HSA-6798695">
    <property type="pathway name" value="Neutrophil degranulation"/>
</dbReference>
<dbReference type="Reactome" id="R-HSA-877300">
    <property type="pathway name" value="Interferon gamma signaling"/>
</dbReference>
<dbReference type="Reactome" id="R-HSA-9755511">
    <property type="pathway name" value="KEAP1-NFE2L2 pathway"/>
</dbReference>
<dbReference type="SABIO-RK" id="Q05655"/>
<dbReference type="SignaLink" id="Q05655"/>
<dbReference type="SIGNOR" id="Q05655"/>
<dbReference type="BioGRID-ORCS" id="5580">
    <property type="hits" value="18 hits in 1191 CRISPR screens"/>
</dbReference>
<dbReference type="ChiTaRS" id="PRKCD">
    <property type="organism name" value="human"/>
</dbReference>
<dbReference type="EvolutionaryTrace" id="Q05655"/>
<dbReference type="GeneWiki" id="PRKCD"/>
<dbReference type="GenomeRNAi" id="5580"/>
<dbReference type="Pharos" id="Q05655">
    <property type="development level" value="Tclin"/>
</dbReference>
<dbReference type="PRO" id="PR:Q05655"/>
<dbReference type="Proteomes" id="UP000005640">
    <property type="component" value="Chromosome 3"/>
</dbReference>
<dbReference type="RNAct" id="Q05655">
    <property type="molecule type" value="protein"/>
</dbReference>
<dbReference type="Bgee" id="ENSG00000163932">
    <property type="expression patterns" value="Expressed in monocyte and 149 other cell types or tissues"/>
</dbReference>
<dbReference type="ExpressionAtlas" id="Q05655">
    <property type="expression patterns" value="baseline and differential"/>
</dbReference>
<dbReference type="GO" id="GO:0035578">
    <property type="term" value="C:azurophil granule lumen"/>
    <property type="evidence" value="ECO:0000304"/>
    <property type="project" value="Reactome"/>
</dbReference>
<dbReference type="GO" id="GO:0005911">
    <property type="term" value="C:cell-cell junction"/>
    <property type="evidence" value="ECO:0007669"/>
    <property type="project" value="Ensembl"/>
</dbReference>
<dbReference type="GO" id="GO:0005737">
    <property type="term" value="C:cytoplasm"/>
    <property type="evidence" value="ECO:0000314"/>
    <property type="project" value="UniProtKB"/>
</dbReference>
<dbReference type="GO" id="GO:0005829">
    <property type="term" value="C:cytosol"/>
    <property type="evidence" value="ECO:0000314"/>
    <property type="project" value="HPA"/>
</dbReference>
<dbReference type="GO" id="GO:0036019">
    <property type="term" value="C:endolysosome"/>
    <property type="evidence" value="ECO:0000314"/>
    <property type="project" value="UniProtKB"/>
</dbReference>
<dbReference type="GO" id="GO:0005783">
    <property type="term" value="C:endoplasmic reticulum"/>
    <property type="evidence" value="ECO:0000314"/>
    <property type="project" value="UniProtKB"/>
</dbReference>
<dbReference type="GO" id="GO:0070062">
    <property type="term" value="C:extracellular exosome"/>
    <property type="evidence" value="ECO:0007005"/>
    <property type="project" value="UniProtKB"/>
</dbReference>
<dbReference type="GO" id="GO:0005576">
    <property type="term" value="C:extracellular region"/>
    <property type="evidence" value="ECO:0000304"/>
    <property type="project" value="Reactome"/>
</dbReference>
<dbReference type="GO" id="GO:0005739">
    <property type="term" value="C:mitochondrion"/>
    <property type="evidence" value="ECO:0007669"/>
    <property type="project" value="UniProtKB-SubCell"/>
</dbReference>
<dbReference type="GO" id="GO:0016363">
    <property type="term" value="C:nuclear matrix"/>
    <property type="evidence" value="ECO:0007669"/>
    <property type="project" value="Ensembl"/>
</dbReference>
<dbReference type="GO" id="GO:0005654">
    <property type="term" value="C:nucleoplasm"/>
    <property type="evidence" value="ECO:0000304"/>
    <property type="project" value="Reactome"/>
</dbReference>
<dbReference type="GO" id="GO:0005634">
    <property type="term" value="C:nucleus"/>
    <property type="evidence" value="ECO:0000314"/>
    <property type="project" value="UniProtKB"/>
</dbReference>
<dbReference type="GO" id="GO:0048471">
    <property type="term" value="C:perinuclear region of cytoplasm"/>
    <property type="evidence" value="ECO:0007669"/>
    <property type="project" value="UniProtKB-SubCell"/>
</dbReference>
<dbReference type="GO" id="GO:0005886">
    <property type="term" value="C:plasma membrane"/>
    <property type="evidence" value="ECO:0000314"/>
    <property type="project" value="UniProtKB"/>
</dbReference>
<dbReference type="GO" id="GO:0005524">
    <property type="term" value="F:ATP binding"/>
    <property type="evidence" value="ECO:0007669"/>
    <property type="project" value="UniProtKB-KW"/>
</dbReference>
<dbReference type="GO" id="GO:0004697">
    <property type="term" value="F:diacylglycerol-dependent serine/threonine kinase activity"/>
    <property type="evidence" value="ECO:0000269"/>
    <property type="project" value="Reactome"/>
</dbReference>
<dbReference type="GO" id="GO:0004699">
    <property type="term" value="F:diacylglycerol-dependent, calcium-independent serine/threonine kinase activity"/>
    <property type="evidence" value="ECO:0000250"/>
    <property type="project" value="UniProtKB"/>
</dbReference>
<dbReference type="GO" id="GO:0008047">
    <property type="term" value="F:enzyme activator activity"/>
    <property type="evidence" value="ECO:0000314"/>
    <property type="project" value="UniProtKB"/>
</dbReference>
<dbReference type="GO" id="GO:0019899">
    <property type="term" value="F:enzyme binding"/>
    <property type="evidence" value="ECO:0000353"/>
    <property type="project" value="UniProtKB"/>
</dbReference>
<dbReference type="GO" id="GO:0043560">
    <property type="term" value="F:insulin receptor substrate binding"/>
    <property type="evidence" value="ECO:0000250"/>
    <property type="project" value="BHF-UCL"/>
</dbReference>
<dbReference type="GO" id="GO:0004715">
    <property type="term" value="F:non-membrane spanning protein tyrosine kinase activity"/>
    <property type="evidence" value="ECO:0007669"/>
    <property type="project" value="UniProtKB-EC"/>
</dbReference>
<dbReference type="GO" id="GO:0004672">
    <property type="term" value="F:protein kinase activity"/>
    <property type="evidence" value="ECO:0000314"/>
    <property type="project" value="UniProtKB"/>
</dbReference>
<dbReference type="GO" id="GO:0019901">
    <property type="term" value="F:protein kinase binding"/>
    <property type="evidence" value="ECO:0000353"/>
    <property type="project" value="UniProtKB"/>
</dbReference>
<dbReference type="GO" id="GO:0106310">
    <property type="term" value="F:protein serine kinase activity"/>
    <property type="evidence" value="ECO:0000314"/>
    <property type="project" value="UniProtKB"/>
</dbReference>
<dbReference type="GO" id="GO:0004674">
    <property type="term" value="F:protein serine/threonine kinase activity"/>
    <property type="evidence" value="ECO:0000314"/>
    <property type="project" value="UniProtKB"/>
</dbReference>
<dbReference type="GO" id="GO:0008270">
    <property type="term" value="F:zinc ion binding"/>
    <property type="evidence" value="ECO:0007669"/>
    <property type="project" value="UniProtKB-KW"/>
</dbReference>
<dbReference type="GO" id="GO:0032147">
    <property type="term" value="P:activation of protein kinase activity"/>
    <property type="evidence" value="ECO:0000314"/>
    <property type="project" value="ParkinsonsUK-UCL"/>
</dbReference>
<dbReference type="GO" id="GO:0006915">
    <property type="term" value="P:apoptotic process"/>
    <property type="evidence" value="ECO:0000314"/>
    <property type="project" value="UniProtKB"/>
</dbReference>
<dbReference type="GO" id="GO:0042100">
    <property type="term" value="P:B cell proliferation"/>
    <property type="evidence" value="ECO:0007669"/>
    <property type="project" value="Ensembl"/>
</dbReference>
<dbReference type="GO" id="GO:0060326">
    <property type="term" value="P:cell chemotaxis"/>
    <property type="evidence" value="ECO:0000315"/>
    <property type="project" value="UniProtKB"/>
</dbReference>
<dbReference type="GO" id="GO:1904385">
    <property type="term" value="P:cellular response to angiotensin"/>
    <property type="evidence" value="ECO:0000314"/>
    <property type="project" value="UniProtKB"/>
</dbReference>
<dbReference type="GO" id="GO:0071398">
    <property type="term" value="P:cellular response to fatty acid"/>
    <property type="evidence" value="ECO:0000304"/>
    <property type="project" value="BHF-UCL"/>
</dbReference>
<dbReference type="GO" id="GO:0070301">
    <property type="term" value="P:cellular response to hydrogen peroxide"/>
    <property type="evidence" value="ECO:0000314"/>
    <property type="project" value="ParkinsonsUK-UCL"/>
</dbReference>
<dbReference type="GO" id="GO:0071447">
    <property type="term" value="P:cellular response to hydroperoxide"/>
    <property type="evidence" value="ECO:0000314"/>
    <property type="project" value="UniProtKB"/>
</dbReference>
<dbReference type="GO" id="GO:0034644">
    <property type="term" value="P:cellular response to UV"/>
    <property type="evidence" value="ECO:0000314"/>
    <property type="project" value="UniProtKB"/>
</dbReference>
<dbReference type="GO" id="GO:0090398">
    <property type="term" value="P:cellular senescence"/>
    <property type="evidence" value="ECO:0000315"/>
    <property type="project" value="BHF-UCL"/>
</dbReference>
<dbReference type="GO" id="GO:0042742">
    <property type="term" value="P:defense response to bacterium"/>
    <property type="evidence" value="ECO:0000250"/>
    <property type="project" value="UniProtKB"/>
</dbReference>
<dbReference type="GO" id="GO:0006974">
    <property type="term" value="P:DNA damage response"/>
    <property type="evidence" value="ECO:0000315"/>
    <property type="project" value="UniProtKB"/>
</dbReference>
<dbReference type="GO" id="GO:0038096">
    <property type="term" value="P:Fc-gamma receptor signaling pathway involved in phagocytosis"/>
    <property type="evidence" value="ECO:0000304"/>
    <property type="project" value="Reactome"/>
</dbReference>
<dbReference type="GO" id="GO:0016064">
    <property type="term" value="P:immunoglobulin mediated immune response"/>
    <property type="evidence" value="ECO:0007669"/>
    <property type="project" value="Ensembl"/>
</dbReference>
<dbReference type="GO" id="GO:0035556">
    <property type="term" value="P:intracellular signal transduction"/>
    <property type="evidence" value="ECO:0000318"/>
    <property type="project" value="GO_Central"/>
</dbReference>
<dbReference type="GO" id="GO:0008631">
    <property type="term" value="P:intrinsic apoptotic signaling pathway in response to oxidative stress"/>
    <property type="evidence" value="ECO:0000304"/>
    <property type="project" value="ParkinsonsUK-UCL"/>
</dbReference>
<dbReference type="GO" id="GO:0030837">
    <property type="term" value="P:negative regulation of actin filament polymerization"/>
    <property type="evidence" value="ECO:0000250"/>
    <property type="project" value="UniProtKB"/>
</dbReference>
<dbReference type="GO" id="GO:0051490">
    <property type="term" value="P:negative regulation of filopodium assembly"/>
    <property type="evidence" value="ECO:0000250"/>
    <property type="project" value="UniProtKB"/>
</dbReference>
<dbReference type="GO" id="GO:0034351">
    <property type="term" value="P:negative regulation of glial cell apoptotic process"/>
    <property type="evidence" value="ECO:0000315"/>
    <property type="project" value="UniProtKB"/>
</dbReference>
<dbReference type="GO" id="GO:0050728">
    <property type="term" value="P:negative regulation of inflammatory response"/>
    <property type="evidence" value="ECO:0000315"/>
    <property type="project" value="BHF-UCL"/>
</dbReference>
<dbReference type="GO" id="GO:0046627">
    <property type="term" value="P:negative regulation of insulin receptor signaling pathway"/>
    <property type="evidence" value="ECO:0000250"/>
    <property type="project" value="BHF-UCL"/>
</dbReference>
<dbReference type="GO" id="GO:0043409">
    <property type="term" value="P:negative regulation of MAPK cascade"/>
    <property type="evidence" value="ECO:0000315"/>
    <property type="project" value="BHF-UCL"/>
</dbReference>
<dbReference type="GO" id="GO:0090331">
    <property type="term" value="P:negative regulation of platelet aggregation"/>
    <property type="evidence" value="ECO:0000250"/>
    <property type="project" value="UniProtKB"/>
</dbReference>
<dbReference type="GO" id="GO:0042119">
    <property type="term" value="P:neutrophil activation"/>
    <property type="evidence" value="ECO:0000314"/>
    <property type="project" value="UniProtKB"/>
</dbReference>
<dbReference type="GO" id="GO:0018105">
    <property type="term" value="P:peptidyl-serine phosphorylation"/>
    <property type="evidence" value="ECO:0000314"/>
    <property type="project" value="UniProtKB"/>
</dbReference>
<dbReference type="GO" id="GO:0018107">
    <property type="term" value="P:peptidyl-threonine phosphorylation"/>
    <property type="evidence" value="ECO:0000314"/>
    <property type="project" value="UniProtKB"/>
</dbReference>
<dbReference type="GO" id="GO:2001235">
    <property type="term" value="P:positive regulation of apoptotic signaling pathway"/>
    <property type="evidence" value="ECO:0007669"/>
    <property type="project" value="Ensembl"/>
</dbReference>
<dbReference type="GO" id="GO:2000304">
    <property type="term" value="P:positive regulation of ceramide biosynthetic process"/>
    <property type="evidence" value="ECO:0000315"/>
    <property type="project" value="BHF-UCL"/>
</dbReference>
<dbReference type="GO" id="GO:0032079">
    <property type="term" value="P:positive regulation of endodeoxyribonuclease activity"/>
    <property type="evidence" value="ECO:0000315"/>
    <property type="project" value="UniProtKB"/>
</dbReference>
<dbReference type="GO" id="GO:2000753">
    <property type="term" value="P:positive regulation of glucosylceramide catabolic process"/>
    <property type="evidence" value="ECO:0000315"/>
    <property type="project" value="BHF-UCL"/>
</dbReference>
<dbReference type="GO" id="GO:1900163">
    <property type="term" value="P:positive regulation of phospholipid scramblase activity"/>
    <property type="evidence" value="ECO:0000315"/>
    <property type="project" value="UniProtKB"/>
</dbReference>
<dbReference type="GO" id="GO:0042307">
    <property type="term" value="P:positive regulation of protein import into nucleus"/>
    <property type="evidence" value="ECO:0000315"/>
    <property type="project" value="UniProtKB"/>
</dbReference>
<dbReference type="GO" id="GO:2000755">
    <property type="term" value="P:positive regulation of sphingomyelin catabolic process"/>
    <property type="evidence" value="ECO:0000315"/>
    <property type="project" value="BHF-UCL"/>
</dbReference>
<dbReference type="GO" id="GO:0032930">
    <property type="term" value="P:positive regulation of superoxide anion generation"/>
    <property type="evidence" value="ECO:0000315"/>
    <property type="project" value="UniProtKB"/>
</dbReference>
<dbReference type="GO" id="GO:0043687">
    <property type="term" value="P:post-translational protein modification"/>
    <property type="evidence" value="ECO:0000314"/>
    <property type="project" value="UniProtKB"/>
</dbReference>
<dbReference type="GO" id="GO:0070528">
    <property type="term" value="P:protein kinase C signaling"/>
    <property type="evidence" value="ECO:0007669"/>
    <property type="project" value="Ensembl"/>
</dbReference>
<dbReference type="GO" id="GO:0006468">
    <property type="term" value="P:protein phosphorylation"/>
    <property type="evidence" value="ECO:0000314"/>
    <property type="project" value="UniProtKB"/>
</dbReference>
<dbReference type="GO" id="GO:0050821">
    <property type="term" value="P:protein stabilization"/>
    <property type="evidence" value="ECO:0000303"/>
    <property type="project" value="UniProtKB"/>
</dbReference>
<dbReference type="GO" id="GO:0032956">
    <property type="term" value="P:regulation of actin cytoskeleton organization"/>
    <property type="evidence" value="ECO:0000315"/>
    <property type="project" value="CACAO"/>
</dbReference>
<dbReference type="GO" id="GO:2000303">
    <property type="term" value="P:regulation of ceramide biosynthetic process"/>
    <property type="evidence" value="ECO:0000314"/>
    <property type="project" value="UniProtKB"/>
</dbReference>
<dbReference type="GO" id="GO:0043488">
    <property type="term" value="P:regulation of mRNA stability"/>
    <property type="evidence" value="ECO:0000304"/>
    <property type="project" value="Reactome"/>
</dbReference>
<dbReference type="GO" id="GO:0007165">
    <property type="term" value="P:signal transduction"/>
    <property type="evidence" value="ECO:0000304"/>
    <property type="project" value="ProtInc"/>
</dbReference>
<dbReference type="GO" id="GO:0023021">
    <property type="term" value="P:termination of signal transduction"/>
    <property type="evidence" value="ECO:0000315"/>
    <property type="project" value="BHF-UCL"/>
</dbReference>
<dbReference type="CDD" id="cd20834">
    <property type="entry name" value="C1_nPKC_theta-like_rpt1"/>
    <property type="match status" value="1"/>
</dbReference>
<dbReference type="CDD" id="cd20837">
    <property type="entry name" value="C1_nPKC_theta-like_rpt2"/>
    <property type="match status" value="1"/>
</dbReference>
<dbReference type="CDD" id="cd05620">
    <property type="entry name" value="STKc_nPKC_delta"/>
    <property type="match status" value="1"/>
</dbReference>
<dbReference type="FunFam" id="3.30.60.20:FF:000003">
    <property type="entry name" value="Protein kinase C delta"/>
    <property type="match status" value="1"/>
</dbReference>
<dbReference type="FunFam" id="2.60.40.150:FF:000049">
    <property type="entry name" value="Protein kinase C delta type"/>
    <property type="match status" value="1"/>
</dbReference>
<dbReference type="FunFam" id="3.30.60.20:FF:000008">
    <property type="entry name" value="Protein kinase C theta"/>
    <property type="match status" value="1"/>
</dbReference>
<dbReference type="FunFam" id="3.30.200.20:FF:000020">
    <property type="entry name" value="Protein kinase C, alpha"/>
    <property type="match status" value="1"/>
</dbReference>
<dbReference type="FunFam" id="1.10.510.10:FF:000150">
    <property type="entry name" value="Protein kinase C, theta"/>
    <property type="match status" value="1"/>
</dbReference>
<dbReference type="Gene3D" id="3.30.60.20">
    <property type="match status" value="2"/>
</dbReference>
<dbReference type="Gene3D" id="2.60.40.150">
    <property type="entry name" value="C2 domain"/>
    <property type="match status" value="1"/>
</dbReference>
<dbReference type="Gene3D" id="3.30.200.20">
    <property type="entry name" value="Phosphorylase Kinase, domain 1"/>
    <property type="match status" value="1"/>
</dbReference>
<dbReference type="Gene3D" id="1.10.510.10">
    <property type="entry name" value="Transferase(Phosphotransferase) domain 1"/>
    <property type="match status" value="1"/>
</dbReference>
<dbReference type="InterPro" id="IPR000961">
    <property type="entry name" value="AGC-kinase_C"/>
</dbReference>
<dbReference type="InterPro" id="IPR046349">
    <property type="entry name" value="C1-like_sf"/>
</dbReference>
<dbReference type="InterPro" id="IPR000008">
    <property type="entry name" value="C2_dom"/>
</dbReference>
<dbReference type="InterPro" id="IPR035892">
    <property type="entry name" value="C2_domain_sf"/>
</dbReference>
<dbReference type="InterPro" id="IPR020454">
    <property type="entry name" value="DAG/PE-bd"/>
</dbReference>
<dbReference type="InterPro" id="IPR011009">
    <property type="entry name" value="Kinase-like_dom_sf"/>
</dbReference>
<dbReference type="InterPro" id="IPR034667">
    <property type="entry name" value="nPKC_delta"/>
</dbReference>
<dbReference type="InterPro" id="IPR002219">
    <property type="entry name" value="PE/DAG-bd"/>
</dbReference>
<dbReference type="InterPro" id="IPR027436">
    <property type="entry name" value="PKC_delta"/>
</dbReference>
<dbReference type="InterPro" id="IPR017892">
    <property type="entry name" value="Pkinase_C"/>
</dbReference>
<dbReference type="InterPro" id="IPR014376">
    <property type="entry name" value="Prot_kin_PKC_delta"/>
</dbReference>
<dbReference type="InterPro" id="IPR000719">
    <property type="entry name" value="Prot_kinase_dom"/>
</dbReference>
<dbReference type="InterPro" id="IPR017441">
    <property type="entry name" value="Protein_kinase_ATP_BS"/>
</dbReference>
<dbReference type="InterPro" id="IPR008271">
    <property type="entry name" value="Ser/Thr_kinase_AS"/>
</dbReference>
<dbReference type="PANTHER" id="PTHR24351">
    <property type="entry name" value="RIBOSOMAL PROTEIN S6 KINASE"/>
    <property type="match status" value="1"/>
</dbReference>
<dbReference type="Pfam" id="PF00130">
    <property type="entry name" value="C1_1"/>
    <property type="match status" value="2"/>
</dbReference>
<dbReference type="Pfam" id="PF21494">
    <property type="entry name" value="PKC_C2"/>
    <property type="match status" value="1"/>
</dbReference>
<dbReference type="Pfam" id="PF00069">
    <property type="entry name" value="Pkinase"/>
    <property type="match status" value="1"/>
</dbReference>
<dbReference type="Pfam" id="PF00433">
    <property type="entry name" value="Pkinase_C"/>
    <property type="match status" value="1"/>
</dbReference>
<dbReference type="PIRSF" id="PIRSF000551">
    <property type="entry name" value="PKC_delta"/>
    <property type="match status" value="1"/>
</dbReference>
<dbReference type="PIRSF" id="PIRSF501104">
    <property type="entry name" value="Protein_kin_C_delta"/>
    <property type="match status" value="1"/>
</dbReference>
<dbReference type="PRINTS" id="PR00008">
    <property type="entry name" value="DAGPEDOMAIN"/>
</dbReference>
<dbReference type="SMART" id="SM00109">
    <property type="entry name" value="C1"/>
    <property type="match status" value="2"/>
</dbReference>
<dbReference type="SMART" id="SM00133">
    <property type="entry name" value="S_TK_X"/>
    <property type="match status" value="1"/>
</dbReference>
<dbReference type="SMART" id="SM00220">
    <property type="entry name" value="S_TKc"/>
    <property type="match status" value="1"/>
</dbReference>
<dbReference type="SUPFAM" id="SSF49562">
    <property type="entry name" value="C2 domain (Calcium/lipid-binding domain, CaLB)"/>
    <property type="match status" value="1"/>
</dbReference>
<dbReference type="SUPFAM" id="SSF57889">
    <property type="entry name" value="Cysteine-rich domain"/>
    <property type="match status" value="2"/>
</dbReference>
<dbReference type="SUPFAM" id="SSF56112">
    <property type="entry name" value="Protein kinase-like (PK-like)"/>
    <property type="match status" value="1"/>
</dbReference>
<dbReference type="PROSITE" id="PS51285">
    <property type="entry name" value="AGC_KINASE_CTER"/>
    <property type="match status" value="1"/>
</dbReference>
<dbReference type="PROSITE" id="PS50004">
    <property type="entry name" value="C2"/>
    <property type="match status" value="1"/>
</dbReference>
<dbReference type="PROSITE" id="PS00107">
    <property type="entry name" value="PROTEIN_KINASE_ATP"/>
    <property type="match status" value="1"/>
</dbReference>
<dbReference type="PROSITE" id="PS50011">
    <property type="entry name" value="PROTEIN_KINASE_DOM"/>
    <property type="match status" value="1"/>
</dbReference>
<dbReference type="PROSITE" id="PS00108">
    <property type="entry name" value="PROTEIN_KINASE_ST"/>
    <property type="match status" value="1"/>
</dbReference>
<dbReference type="PROSITE" id="PS00479">
    <property type="entry name" value="ZF_DAG_PE_1"/>
    <property type="match status" value="2"/>
</dbReference>
<dbReference type="PROSITE" id="PS50081">
    <property type="entry name" value="ZF_DAG_PE_2"/>
    <property type="match status" value="2"/>
</dbReference>
<name>KPCD_HUMAN</name>
<comment type="function">
    <text evidence="3 9 12 14 15 17 18 22 23 24 32 33">Calcium-independent, phospholipid- and diacylglycerol (DAG)-dependent serine/threonine-protein kinase that plays contrasting roles in cell death and cell survival by functioning as a pro-apoptotic protein during DNA damage-induced apoptosis, but acting as an anti-apoptotic protein during cytokine receptor-initiated cell death, is involved in tumor suppression as well as survival of several cancers, is required for oxygen radical production by NADPH oxidase and acts as positive or negative regulator in platelet functional responses (PubMed:21406692, PubMed:21810427). Negatively regulates B cell proliferation and also has an important function in self-antigen induced B cell tolerance induction (By similarity). Upon DNA damage, activates the promoter of the death-promoting transcription factor BCLAF1/Btf to trigger BCLAF1-mediated p53/TP53 gene transcription and apoptosis (PubMed:21406692, PubMed:21810427). In response to oxidative stress, interact with and activate CHUK/IKKA in the nucleus, causing the phosphorylation of p53/TP53 (PubMed:21406692, PubMed:21810427). In the case of ER stress or DNA damage-induced apoptosis, can form a complex with the tyrosine-protein kinase ABL1 which trigger apoptosis independently of p53/TP53 (PubMed:21406692, PubMed:21810427). In cytosol can trigger apoptosis by activating MAPK11 or MAPK14, inhibiting AKT1 and decreasing the level of X-linked inhibitor of apoptosis protein (XIAP), whereas in nucleus induces apoptosis via the activation of MAPK8 or MAPK9. Upon ionizing radiation treatment, is required for the activation of the apoptosis regulators BAX and BAK, which trigger the mitochondrial cell death pathway. Can phosphorylate MCL1 and target it for degradation which is sufficient to trigger for BAX activation and apoptosis. Is required for the control of cell cycle progression both at G1/S and G2/M phases. Mediates phorbol 12-myristate 13-acetate (PMA)-induced inhibition of cell cycle progression at G1/S phase by up-regulating the CDK inhibitor CDKN1A/p21 and inhibiting the cyclin CCNA2 promoter activity. In response to UV irradiation can phosphorylate CDK1, which is important for the G2/M DNA damage checkpoint activation (By similarity). Can protect glioma cells from the apoptosis induced by TNFSF10/TRAIL, probably by inducing increased phosphorylation and subsequent activation of AKT1 (PubMed:15774464). Is highly expressed in a number of cancer cells and promotes cell survival and resistance against chemotherapeutic drugs by inducing cyclin D1 (CCND1) and hyperphosphorylation of RB1, and via several pro-survival pathways, including NF-kappa-B, AKT1 and MAPK1/3 (ERK1/2). Involved in antifungal immunity by mediating phosphorylation and activation of CARD9 downstream of C-type lectin receptors activation, promoting interaction between CARD9 and BCL10, followed by activation of NF-kappa-B and MAP kinase p38 pathways (By similarity). Can also act as tumor suppressor upon mitogenic stimulation with PMA or TPA. In N-formyl-methionyl-leucyl-phenylalanine (fMLP)-treated cells, is required for NCF1 (p47-phox) phosphorylation and activation of NADPH oxidase activity, and regulates TNF-elicited superoxide anion production in neutrophils, by direct phosphorylation and activation of NCF1 or indirectly through MAPK1/3 (ERK1/2) signaling pathways (PubMed:19801500). May also play a role in the regulation of NADPH oxidase activity in eosinophil after stimulation with IL5, leukotriene B4 or PMA (PubMed:11748588). In collagen-induced platelet aggregation, acts a negative regulator of filopodia formation and actin polymerization by interacting with and negatively regulating VASP phosphorylation (PubMed:16940418). Downstream of PAR1, PAR4 and CD36/GP4 receptors, regulates differentially platelet dense granule secretion; acts as a positive regulator in PAR-mediated granule secretion, whereas it negatively regulates CD36/GP4-mediated granule release (PubMed:19587372). Phosphorylates MUC1 in the C-terminal and regulates the interaction between MUC1 and beta-catenin (PubMed:11877440). The catalytic subunit phosphorylates 14-3-3 proteins (YWHAB, YWHAZ and YWHAH) in a sphingosine-dependent fashion (By similarity). Phosphorylates ELAVL1 in response to angiotensin-2 treatment (PubMed:18285462). Phosphorylates mitochondrial phospholipid scramblase 3 (PLSCR3), resulting in increased cardiolipin expression on the mitochondrial outer membrane which facilitates apoptosis (PubMed:12649167). Phosphorylates SMPD1 which induces SMPD1 secretion (PubMed:17303575).</text>
</comment>
<comment type="catalytic activity">
    <reaction evidence="22 27">
        <text>L-seryl-[protein] + ATP = O-phospho-L-seryl-[protein] + ADP + H(+)</text>
        <dbReference type="Rhea" id="RHEA:17989"/>
        <dbReference type="Rhea" id="RHEA-COMP:9863"/>
        <dbReference type="Rhea" id="RHEA-COMP:11604"/>
        <dbReference type="ChEBI" id="CHEBI:15378"/>
        <dbReference type="ChEBI" id="CHEBI:29999"/>
        <dbReference type="ChEBI" id="CHEBI:30616"/>
        <dbReference type="ChEBI" id="CHEBI:83421"/>
        <dbReference type="ChEBI" id="CHEBI:456216"/>
        <dbReference type="EC" id="2.7.11.13"/>
    </reaction>
</comment>
<comment type="catalytic activity">
    <reaction evidence="14 22 27">
        <text>L-threonyl-[protein] + ATP = O-phospho-L-threonyl-[protein] + ADP + H(+)</text>
        <dbReference type="Rhea" id="RHEA:46608"/>
        <dbReference type="Rhea" id="RHEA-COMP:11060"/>
        <dbReference type="Rhea" id="RHEA-COMP:11605"/>
        <dbReference type="ChEBI" id="CHEBI:15378"/>
        <dbReference type="ChEBI" id="CHEBI:30013"/>
        <dbReference type="ChEBI" id="CHEBI:30616"/>
        <dbReference type="ChEBI" id="CHEBI:61977"/>
        <dbReference type="ChEBI" id="CHEBI:456216"/>
        <dbReference type="EC" id="2.7.11.13"/>
    </reaction>
</comment>
<comment type="catalytic activity">
    <reaction evidence="8">
        <text>L-tyrosyl-[protein] + ATP = O-phospho-L-tyrosyl-[protein] + ADP + H(+)</text>
        <dbReference type="Rhea" id="RHEA:10596"/>
        <dbReference type="Rhea" id="RHEA-COMP:10136"/>
        <dbReference type="Rhea" id="RHEA-COMP:20101"/>
        <dbReference type="ChEBI" id="CHEBI:15378"/>
        <dbReference type="ChEBI" id="CHEBI:30616"/>
        <dbReference type="ChEBI" id="CHEBI:46858"/>
        <dbReference type="ChEBI" id="CHEBI:61978"/>
        <dbReference type="ChEBI" id="CHEBI:456216"/>
        <dbReference type="EC" id="2.7.10.2"/>
    </reaction>
</comment>
<comment type="activity regulation">
    <text evidence="1 27">Novel PKCs (PRKCD, PRKCE, PRKCH and PRKCQ) are calcium-insensitive, but activated by diacylglycerol (DAG) and phosphatidylserine. Three specific sites; Thr-507 (activation loop of the kinase domain), Ser-645 (turn motif) and Ser-664 (hydrophobic region), need to be phosphorylated for its full activation. Activated by caspase-3 (CASP3) cleavage during apoptosis. After cleavage, the pseudosubstrate motif in the regulatory subunit is released from the substrate recognition site of the catalytic subunit, which enables PRKCD to become constitutively activated. The catalytic subunit which displays properties of a sphingosine-dependent protein kinase is activated by D-erythro-sphingosine (Sph) or N,N-dimethyl-D-erythrosphingosine (DMS) or N,N,N-trimethyl-D-erythrosphingosine (TMS), but not by ceramide or Sph-1-P and is strongly inhibited by phosphatidylserine (By similarity). Inhibited by PRKCH upstream open reading frame 2 (PubMed:34593629).</text>
</comment>
<comment type="biophysicochemical properties">
    <kinetics>
        <KM evidence="14">10.5 nM for PLSC3</KM>
    </kinetics>
</comment>
<comment type="subunit">
    <text evidence="3 11 12 13 14 16 17 26 27">Interacts with PDPK1 (via N-terminal region) (PubMed:11781095). Interacts with RAD9A (PubMed:12628935). Interacts with CDCP1 (PubMed:15851033). Interacts with MUC1 (PubMed:11877440). Interacts with VASP (PubMed:16940418). Interacts with CAVIN3 (By similarity). Interacts with PRKD2 (via N-terminus and zing-finger domain 1 and 2) in response to oxidative stress; the interaction is independent of PRKD2 tyrosine phosphorylation (PubMed:28428613). Interacts with PLSC3; interaction is enhanced by UV irradiation (PubMed:12649167). Interacts with PRKCH upstream open reading frame 2; the interaction leads to inhibition of kinase activity (PubMed:34593629).</text>
</comment>
<comment type="interaction">
    <interactant intactId="EBI-704279">
        <id>Q05655</id>
    </interactant>
    <interactant intactId="EBI-77613">
        <id>P05067</id>
        <label>APP</label>
    </interactant>
    <organismsDiffer>false</organismsDiffer>
    <experiments>3</experiments>
</comment>
<comment type="interaction">
    <interactant intactId="EBI-704279">
        <id>Q05655</id>
    </interactant>
    <interactant intactId="EBI-7006141">
        <id>Q9BXL7</id>
        <label>CARD11</label>
    </interactant>
    <organismsDiffer>false</organismsDiffer>
    <experiments>7</experiments>
</comment>
<comment type="interaction">
    <interactant intactId="EBI-704279">
        <id>Q05655</id>
    </interactant>
    <interactant intactId="EBI-517508">
        <id>Q9NR28</id>
        <label>DIABLO</label>
    </interactant>
    <organismsDiffer>false</organismsDiffer>
    <experiments>4</experiments>
</comment>
<comment type="interaction">
    <interactant intactId="EBI-704279">
        <id>Q05655</id>
    </interactant>
    <interactant intactId="EBI-515315">
        <id>P06241</id>
        <label>FYN</label>
    </interactant>
    <organismsDiffer>false</organismsDiffer>
    <experiments>5</experiments>
</comment>
<comment type="interaction">
    <interactant intactId="EBI-704279">
        <id>Q05655</id>
    </interactant>
    <interactant intactId="EBI-1267511">
        <id>P17677</id>
        <label>GAP43</label>
    </interactant>
    <organismsDiffer>false</organismsDiffer>
    <experiments>4</experiments>
</comment>
<comment type="interaction">
    <interactant intactId="EBI-704279">
        <id>Q05655</id>
    </interactant>
    <interactant intactId="EBI-9547476">
        <id>C6GKH1</id>
        <label>IL32</label>
    </interactant>
    <organismsDiffer>false</organismsDiffer>
    <experiments>3</experiments>
</comment>
<comment type="interaction">
    <interactant intactId="EBI-704279">
        <id>Q05655</id>
    </interactant>
    <interactant intactId="EBI-8800907">
        <id>P24001-2</id>
        <label>IL32</label>
    </interactant>
    <organismsDiffer>false</organismsDiffer>
    <experiments>7</experiments>
</comment>
<comment type="interaction">
    <interactant intactId="EBI-704279">
        <id>Q05655</id>
    </interactant>
    <interactant intactId="EBI-489611">
        <id>P19878</id>
        <label>NCF2</label>
    </interactant>
    <organismsDiffer>false</organismsDiffer>
    <experiments>3</experiments>
</comment>
<comment type="interaction">
    <interactant intactId="EBI-704279">
        <id>Q05655</id>
    </interactant>
    <interactant intactId="EBI-539628">
        <id>P11388</id>
        <label>TOP2A</label>
    </interactant>
    <organismsDiffer>false</organismsDiffer>
    <experiments>10</experiments>
</comment>
<comment type="interaction">
    <interactant intactId="EBI-704279">
        <id>Q05655</id>
    </interactant>
    <interactant intactId="EBI-366083">
        <id>P04637</id>
        <label>TP53</label>
    </interactant>
    <organismsDiffer>false</organismsDiffer>
    <experiments>4</experiments>
</comment>
<comment type="interaction">
    <interactant intactId="EBI-704279">
        <id>Q05655</id>
    </interactant>
    <interactant intactId="EBI-2337775">
        <id>Q9H3D4</id>
        <label>TP63</label>
    </interactant>
    <organismsDiffer>false</organismsDiffer>
    <experiments>2</experiments>
</comment>
<comment type="interaction">
    <interactant intactId="EBI-704279">
        <id>Q05655</id>
    </interactant>
    <interactant intactId="EBI-11141397">
        <id>Q9UBQ0-2</id>
        <label>VPS29</label>
    </interactant>
    <organismsDiffer>false</organismsDiffer>
    <experiments>3</experiments>
</comment>
<comment type="subcellular location">
    <subcellularLocation>
        <location evidence="15 18 20 22">Cytoplasm</location>
    </subcellularLocation>
    <subcellularLocation>
        <location evidence="14 15 20">Cytoplasm</location>
        <location evidence="14 15 20">Perinuclear region</location>
    </subcellularLocation>
    <subcellularLocation>
        <location evidence="15 20 22">Nucleus</location>
    </subcellularLocation>
    <subcellularLocation>
        <location evidence="18 20">Cell membrane</location>
        <topology evidence="35">Peripheral membrane protein</topology>
    </subcellularLocation>
    <subcellularLocation>
        <location evidence="14">Mitochondrion</location>
    </subcellularLocation>
    <subcellularLocation>
        <location evidence="18">Endomembrane system</location>
    </subcellularLocation>
    <text evidence="14 18">Translocates to the mitochondria upon apoptotic stimulation. Upon activation, translocates to the plasma membrane followed by partial location to the endolysosomes (PubMed:17303575).</text>
</comment>
<comment type="alternative products">
    <event type="alternative splicing"/>
    <isoform>
        <id>Q05655-1</id>
        <name>1</name>
        <sequence type="displayed"/>
    </isoform>
    <isoform>
        <id>Q05655-2</id>
        <name>2</name>
        <name>PKCdeltaVIII</name>
        <sequence type="described" ref="VSP_043899"/>
    </isoform>
</comment>
<comment type="domain">
    <text>The C1 domain, containing the phorbol ester/DAG-type region 1 (C1A) and 2 (C1B), is the diacylglycerol sensor.</text>
</comment>
<comment type="domain">
    <text>The C2 domain is a non-calcium binding domain. It binds proteins containing phosphotyrosine in a sequence-specific manner.</text>
</comment>
<comment type="PTM">
    <text evidence="3 11 15 19 20 24">Autophosphorylated and/or phosphorylated at Thr-507, within the activation loop; phosphorylation at Thr-507 is not a prerequisite for enzymatic activity (PubMed:19801500). Autophosphorylated at Ser-299, Ser-302 and Ser-304 (PubMed:17603046). Upon TNFSF10/TRAIL treatment, phosphorylated at Tyr-155; phosphorylation is required for its translocation to the endoplasmic reticulum and cleavage by caspase-3 (PubMed:15774464). Phosphorylated at Tyr-313, Tyr-334 and Tyr-567; phosphorylation of Tyr-313 and Tyr-567 following thrombin or zymosan stimulation potentiates its kinase activity (PubMed:17570831). Phosphorylated by protein kinase PDPK1; phosphorylation is inhibited by the apoptotic C-terminal cleavage product of PKN2 (PubMed:11781095). Phosphorylated at Tyr-313 through a SYK and SRC mechanism downstream of C-type lectin receptors activation, promoting its activation (By similarity).</text>
</comment>
<comment type="PTM">
    <text evidence="1">Proteolytically cleaved into a catalytic subunit and a regulatory subunit by caspase-3 during apoptosis which results in kinase activation.</text>
</comment>
<comment type="disease" evidence="25">
    <disease id="DI-03976">
        <name>Autoimmune lymphoproliferative syndrome 3</name>
        <acronym>ALPS3</acronym>
        <description>A primary immunodeficiency characterized by antibody deficiency, hypogammaglobulinemia, recurrent bacterial infections and an inability to mount an antibody response to antigen. The defect results from a failure of B-cell differentiation and impaired secretion of immunoglobulins; the numbers of circulating B-cells is usually in the normal range, but can be low. CVID9 patients have B-cell deficiency and severe autoimmunity.</description>
        <dbReference type="MIM" id="615559"/>
    </disease>
    <text>The disease is caused by variants affecting the gene represented in this entry.</text>
</comment>
<comment type="miscellaneous">
    <molecule>Isoform 2</molecule>
    <text evidence="34">Antiapoptotic isoform, resistant to caspase-3 cleavage.</text>
</comment>
<comment type="similarity">
    <text evidence="34">Belongs to the protein kinase superfamily. AGC Ser/Thr protein kinase family. PKC subfamily.</text>
</comment>
<comment type="online information" name="Atlas of Genetics and Cytogenetics in Oncology and Haematology">
    <link uri="https://atlasgeneticsoncology.org/gene/42901/PRKCD"/>
</comment>
<accession>Q05655</accession>
<accession>B0KZ81</accession>
<accession>B2R834</accession>
<accession>Q15144</accession>
<accession>Q86XJ6</accession>
<sequence length="676" mass="77505">MAPFLRIAFNSYELGSLQAEDEANQPFCAVKMKEALSTERGKTLVQKKPTMYPEWKSTFDAHIYEGRVIQIVLMRAAEEPVSEVTVGVSVLAERCKKNNGKAEFWLDLQPQAKVLMSVQYFLEDVDCKQSMRSEDEAKFPTMNRRGAIKQAKIHYIKNHEFIATFFGQPTFCSVCKDFVWGLNKQGYKCRQCNAAIHKKCIDKIIGRCTGTAANSRDTIFQKERFNIDMPHRFKVHNYMSPTFCDHCGSLLWGLVKQGLKCEDCGMNVHHKCREKVANLCGINQKLLAEALNQVTQRASRRSDSASSEPVGIYQGFEKKTGVAGEDMQDNSGTYGKIWEGSSKCNINNFIFHKVLGKGSFGKVLLGELKGRGEYFAIKALKKDVVLIDDDVECTMVEKRVLTLAAENPFLTHLICTFQTKDHLFFVMEFLNGGDLMYHIQDKGRFELYRATFYAAEIMCGLQFLHSKGIIYRDLKLDNVLLDRDGHIKIADFGMCKENIFGESRASTFCGTPDYIAPEILQGLKYTFSVDWWSFGVLLYEMLIGQSPFHGDDEDELFESIRVDTPHYPRWITKESKDILEKLFEREPTKRLGVTGNIKIHPFFKTINWTLLEKRRLEPPFRPKVKSPRDYSNFDQEFLNEKARLSYSDKNLIDSMDQSAFAGFSFVNPKFEHLLED</sequence>
<keyword id="KW-0002">3D-structure</keyword>
<keyword id="KW-0025">Alternative splicing</keyword>
<keyword id="KW-0053">Apoptosis</keyword>
<keyword id="KW-0067">ATP-binding</keyword>
<keyword id="KW-0131">Cell cycle</keyword>
<keyword id="KW-1003">Cell membrane</keyword>
<keyword id="KW-0963">Cytoplasm</keyword>
<keyword id="KW-0418">Kinase</keyword>
<keyword id="KW-0472">Membrane</keyword>
<keyword id="KW-0479">Metal-binding</keyword>
<keyword id="KW-0496">Mitochondrion</keyword>
<keyword id="KW-0547">Nucleotide-binding</keyword>
<keyword id="KW-0539">Nucleus</keyword>
<keyword id="KW-0597">Phosphoprotein</keyword>
<keyword id="KW-1267">Proteomics identification</keyword>
<keyword id="KW-1185">Reference proteome</keyword>
<keyword id="KW-0677">Repeat</keyword>
<keyword id="KW-0723">Serine/threonine-protein kinase</keyword>
<keyword id="KW-0808">Transferase</keyword>
<keyword id="KW-0043">Tumor suppressor</keyword>
<keyword id="KW-0862">Zinc</keyword>
<keyword id="KW-0863">Zinc-finger</keyword>
<protein>
    <recommendedName>
        <fullName evidence="34">Protein kinase C delta type</fullName>
        <ecNumber evidence="14 22 27">2.7.11.13</ecNumber>
    </recommendedName>
    <alternativeName>
        <fullName>Tyrosine-protein kinase PRKCD</fullName>
        <ecNumber>2.7.10.2</ecNumber>
    </alternativeName>
    <alternativeName>
        <fullName>nPKC-delta</fullName>
    </alternativeName>
    <component>
        <recommendedName>
            <fullName>Protein kinase C delta type regulatory subunit</fullName>
        </recommendedName>
    </component>
    <component>
        <recommendedName>
            <fullName>Protein kinase C delta type catalytic subunit</fullName>
        </recommendedName>
        <alternativeName>
            <fullName>Sphingosine-dependent protein kinase-1</fullName>
            <shortName>SDK1</shortName>
        </alternativeName>
    </component>
</protein>
<organism>
    <name type="scientific">Homo sapiens</name>
    <name type="common">Human</name>
    <dbReference type="NCBI Taxonomy" id="9606"/>
    <lineage>
        <taxon>Eukaryota</taxon>
        <taxon>Metazoa</taxon>
        <taxon>Chordata</taxon>
        <taxon>Craniata</taxon>
        <taxon>Vertebrata</taxon>
        <taxon>Euteleostomi</taxon>
        <taxon>Mammalia</taxon>
        <taxon>Eutheria</taxon>
        <taxon>Euarchontoglires</taxon>
        <taxon>Primates</taxon>
        <taxon>Haplorrhini</taxon>
        <taxon>Catarrhini</taxon>
        <taxon>Hominidae</taxon>
        <taxon>Homo</taxon>
    </lineage>
</organism>
<proteinExistence type="evidence at protein level"/>